<proteinExistence type="evidence at protein level"/>
<accession>Q01831</accession>
<accession>B4DIP3</accession>
<accession>E9PB96</accession>
<accession>E9PH69</accession>
<accession>Q53GT7</accession>
<accession>Q96AX0</accession>
<organism>
    <name type="scientific">Homo sapiens</name>
    <name type="common">Human</name>
    <dbReference type="NCBI Taxonomy" id="9606"/>
    <lineage>
        <taxon>Eukaryota</taxon>
        <taxon>Metazoa</taxon>
        <taxon>Chordata</taxon>
        <taxon>Craniata</taxon>
        <taxon>Vertebrata</taxon>
        <taxon>Euteleostomi</taxon>
        <taxon>Mammalia</taxon>
        <taxon>Eutheria</taxon>
        <taxon>Euarchontoglires</taxon>
        <taxon>Primates</taxon>
        <taxon>Haplorrhini</taxon>
        <taxon>Catarrhini</taxon>
        <taxon>Hominidae</taxon>
        <taxon>Homo</taxon>
    </lineage>
</organism>
<gene>
    <name type="primary">XPC</name>
    <name type="synonym">XPCC</name>
</gene>
<dbReference type="EMBL" id="D21089">
    <property type="protein sequence ID" value="BAA04651.1"/>
    <property type="molecule type" value="mRNA"/>
</dbReference>
<dbReference type="EMBL" id="AF261901">
    <property type="protein sequence ID" value="AAF87574.1"/>
    <property type="molecule type" value="Genomic_DNA"/>
</dbReference>
<dbReference type="EMBL" id="AF261892">
    <property type="protein sequence ID" value="AAF87574.1"/>
    <property type="status" value="JOINED"/>
    <property type="molecule type" value="Genomic_DNA"/>
</dbReference>
<dbReference type="EMBL" id="AF261893">
    <property type="protein sequence ID" value="AAF87574.1"/>
    <property type="status" value="JOINED"/>
    <property type="molecule type" value="Genomic_DNA"/>
</dbReference>
<dbReference type="EMBL" id="AF261894">
    <property type="protein sequence ID" value="AAF87574.1"/>
    <property type="status" value="JOINED"/>
    <property type="molecule type" value="Genomic_DNA"/>
</dbReference>
<dbReference type="EMBL" id="AF261895">
    <property type="protein sequence ID" value="AAF87574.1"/>
    <property type="status" value="JOINED"/>
    <property type="molecule type" value="Genomic_DNA"/>
</dbReference>
<dbReference type="EMBL" id="AF261896">
    <property type="protein sequence ID" value="AAF87574.1"/>
    <property type="status" value="JOINED"/>
    <property type="molecule type" value="Genomic_DNA"/>
</dbReference>
<dbReference type="EMBL" id="AF261897">
    <property type="protein sequence ID" value="AAF87574.1"/>
    <property type="status" value="JOINED"/>
    <property type="molecule type" value="Genomic_DNA"/>
</dbReference>
<dbReference type="EMBL" id="AF261898">
    <property type="protein sequence ID" value="AAF87574.1"/>
    <property type="status" value="JOINED"/>
    <property type="molecule type" value="Genomic_DNA"/>
</dbReference>
<dbReference type="EMBL" id="AF261899">
    <property type="protein sequence ID" value="AAF87574.1"/>
    <property type="status" value="JOINED"/>
    <property type="molecule type" value="Genomic_DNA"/>
</dbReference>
<dbReference type="EMBL" id="AF261900">
    <property type="protein sequence ID" value="AAF87574.1"/>
    <property type="status" value="JOINED"/>
    <property type="molecule type" value="Genomic_DNA"/>
</dbReference>
<dbReference type="EMBL" id="KJ535085">
    <property type="protein sequence ID" value="AHW56724.1"/>
    <property type="molecule type" value="mRNA"/>
</dbReference>
<dbReference type="EMBL" id="AY131066">
    <property type="protein sequence ID" value="AAM77801.1"/>
    <property type="molecule type" value="Genomic_DNA"/>
</dbReference>
<dbReference type="EMBL" id="AK295711">
    <property type="protein sequence ID" value="BAG58555.1"/>
    <property type="molecule type" value="mRNA"/>
</dbReference>
<dbReference type="EMBL" id="AC093495">
    <property type="status" value="NOT_ANNOTATED_CDS"/>
    <property type="molecule type" value="Genomic_DNA"/>
</dbReference>
<dbReference type="EMBL" id="FJ695191">
    <property type="status" value="NOT_ANNOTATED_CDS"/>
    <property type="molecule type" value="Genomic_DNA"/>
</dbReference>
<dbReference type="EMBL" id="FJ695192">
    <property type="status" value="NOT_ANNOTATED_CDS"/>
    <property type="molecule type" value="Genomic_DNA"/>
</dbReference>
<dbReference type="EMBL" id="BC016620">
    <property type="protein sequence ID" value="AAH16620.1"/>
    <property type="molecule type" value="mRNA"/>
</dbReference>
<dbReference type="EMBL" id="AK222844">
    <property type="protein sequence ID" value="BAD96564.1"/>
    <property type="molecule type" value="mRNA"/>
</dbReference>
<dbReference type="EMBL" id="X65024">
    <property type="protein sequence ID" value="CAA46158.1"/>
    <property type="molecule type" value="mRNA"/>
</dbReference>
<dbReference type="CCDS" id="CCDS46763.1">
    <molecule id="Q01831-1"/>
</dbReference>
<dbReference type="PIR" id="S44345">
    <property type="entry name" value="S44345"/>
</dbReference>
<dbReference type="RefSeq" id="NP_004619.3">
    <molecule id="Q01831-1"/>
    <property type="nucleotide sequence ID" value="NM_004628.4"/>
</dbReference>
<dbReference type="PDB" id="2A4J">
    <property type="method" value="NMR"/>
    <property type="chains" value="B=847-863"/>
</dbReference>
<dbReference type="PDB" id="2GGM">
    <property type="method" value="X-ray"/>
    <property type="resolution" value="2.35 A"/>
    <property type="chains" value="C/D=847-863"/>
</dbReference>
<dbReference type="PDB" id="2OBH">
    <property type="method" value="X-ray"/>
    <property type="resolution" value="1.80 A"/>
    <property type="chains" value="C/D=847-863"/>
</dbReference>
<dbReference type="PDB" id="2RVB">
    <property type="method" value="NMR"/>
    <property type="chains" value="A=109-156"/>
</dbReference>
<dbReference type="PDB" id="8EBS">
    <property type="method" value="EM"/>
    <property type="resolution" value="4.00 A"/>
    <property type="chains" value="H=1-940"/>
</dbReference>
<dbReference type="PDB" id="8EBT">
    <property type="method" value="EM"/>
    <property type="resolution" value="3.90 A"/>
    <property type="chains" value="H=635-940"/>
</dbReference>
<dbReference type="PDB" id="8EBU">
    <property type="method" value="EM"/>
    <property type="resolution" value="3.30 A"/>
    <property type="chains" value="H=1-940"/>
</dbReference>
<dbReference type="PDB" id="8EBV">
    <property type="method" value="EM"/>
    <property type="resolution" value="7.10 A"/>
    <property type="chains" value="H=1-940"/>
</dbReference>
<dbReference type="PDB" id="8EBW">
    <property type="method" value="EM"/>
    <property type="resolution" value="5.60 A"/>
    <property type="chains" value="H=1-940"/>
</dbReference>
<dbReference type="PDB" id="8EBX">
    <property type="method" value="EM"/>
    <property type="resolution" value="3.60 A"/>
    <property type="chains" value="H=1-940"/>
</dbReference>
<dbReference type="PDB" id="8EBY">
    <property type="method" value="EM"/>
    <property type="resolution" value="3.60 A"/>
    <property type="chains" value="H=1-940"/>
</dbReference>
<dbReference type="PDBsum" id="2A4J"/>
<dbReference type="PDBsum" id="2GGM"/>
<dbReference type="PDBsum" id="2OBH"/>
<dbReference type="PDBsum" id="2RVB"/>
<dbReference type="PDBsum" id="8EBS"/>
<dbReference type="PDBsum" id="8EBT"/>
<dbReference type="PDBsum" id="8EBU"/>
<dbReference type="PDBsum" id="8EBV"/>
<dbReference type="PDBsum" id="8EBW"/>
<dbReference type="PDBsum" id="8EBX"/>
<dbReference type="PDBsum" id="8EBY"/>
<dbReference type="BMRB" id="Q01831"/>
<dbReference type="EMDB" id="EMD-27997"/>
<dbReference type="EMDB" id="EMD-6495"/>
<dbReference type="EMDB" id="EMD-6497"/>
<dbReference type="EMDB" id="EMD-6498"/>
<dbReference type="SMR" id="Q01831"/>
<dbReference type="BioGRID" id="113345">
    <property type="interactions" value="183"/>
</dbReference>
<dbReference type="ComplexPortal" id="CPX-2669">
    <property type="entry name" value="XPC complex, RAD23B variant"/>
</dbReference>
<dbReference type="ComplexPortal" id="CPX-2672">
    <property type="entry name" value="XPC complex, RAD23A variant"/>
</dbReference>
<dbReference type="CORUM" id="Q01831"/>
<dbReference type="DIP" id="DIP-31225N"/>
<dbReference type="FunCoup" id="Q01831">
    <property type="interactions" value="3648"/>
</dbReference>
<dbReference type="IntAct" id="Q01831">
    <property type="interactions" value="157"/>
</dbReference>
<dbReference type="MINT" id="Q01831"/>
<dbReference type="STRING" id="9606.ENSP00000285021"/>
<dbReference type="GlyGen" id="Q01831">
    <property type="glycosylation" value="2 sites, 1 O-linked glycan (2 sites)"/>
</dbReference>
<dbReference type="iPTMnet" id="Q01831"/>
<dbReference type="PhosphoSitePlus" id="Q01831"/>
<dbReference type="SwissPalm" id="Q01831"/>
<dbReference type="BioMuta" id="XPC"/>
<dbReference type="DMDM" id="296453081"/>
<dbReference type="jPOST" id="Q01831"/>
<dbReference type="MassIVE" id="Q01831"/>
<dbReference type="PaxDb" id="9606-ENSP00000285021"/>
<dbReference type="PeptideAtlas" id="Q01831"/>
<dbReference type="ProteomicsDB" id="19176"/>
<dbReference type="ProteomicsDB" id="20470"/>
<dbReference type="ProteomicsDB" id="58003">
    <molecule id="Q01831-1"/>
</dbReference>
<dbReference type="Pumba" id="Q01831"/>
<dbReference type="Antibodypedia" id="4092">
    <property type="antibodies" value="326 antibodies from 31 providers"/>
</dbReference>
<dbReference type="DNASU" id="7508"/>
<dbReference type="Ensembl" id="ENST00000285021.12">
    <molecule id="Q01831-1"/>
    <property type="protein sequence ID" value="ENSP00000285021.8"/>
    <property type="gene ID" value="ENSG00000154767.16"/>
</dbReference>
<dbReference type="Ensembl" id="ENST00000476581.6">
    <molecule id="Q01831-3"/>
    <property type="protein sequence ID" value="ENSP00000424548.1"/>
    <property type="gene ID" value="ENSG00000154767.16"/>
</dbReference>
<dbReference type="Ensembl" id="ENST00000850573.1">
    <molecule id="Q01831-3"/>
    <property type="protein sequence ID" value="ENSP00000520863.1"/>
    <property type="gene ID" value="ENSG00000154767.16"/>
</dbReference>
<dbReference type="GeneID" id="7508"/>
<dbReference type="KEGG" id="hsa:7508"/>
<dbReference type="MANE-Select" id="ENST00000285021.12">
    <property type="protein sequence ID" value="ENSP00000285021.8"/>
    <property type="RefSeq nucleotide sequence ID" value="NM_004628.5"/>
    <property type="RefSeq protein sequence ID" value="NP_004619.3"/>
</dbReference>
<dbReference type="UCSC" id="uc062gzd.1">
    <molecule id="Q01831-1"/>
    <property type="organism name" value="human"/>
</dbReference>
<dbReference type="AGR" id="HGNC:12816"/>
<dbReference type="CTD" id="7508"/>
<dbReference type="DisGeNET" id="7508"/>
<dbReference type="GeneCards" id="XPC"/>
<dbReference type="GeneReviews" id="XPC"/>
<dbReference type="HGNC" id="HGNC:12816">
    <property type="gene designation" value="XPC"/>
</dbReference>
<dbReference type="HPA" id="ENSG00000154767">
    <property type="expression patterns" value="Low tissue specificity"/>
</dbReference>
<dbReference type="MalaCards" id="XPC"/>
<dbReference type="MIM" id="278720">
    <property type="type" value="phenotype"/>
</dbReference>
<dbReference type="MIM" id="613208">
    <property type="type" value="gene"/>
</dbReference>
<dbReference type="neXtProt" id="NX_Q01831"/>
<dbReference type="OpenTargets" id="ENSG00000154767"/>
<dbReference type="Orphanet" id="910">
    <property type="disease" value="Xeroderma pigmentosum"/>
</dbReference>
<dbReference type="PharmGKB" id="PA37413"/>
<dbReference type="VEuPathDB" id="HostDB:ENSG00000154767"/>
<dbReference type="eggNOG" id="KOG2179">
    <property type="taxonomic scope" value="Eukaryota"/>
</dbReference>
<dbReference type="GeneTree" id="ENSGT00390000005194"/>
<dbReference type="HOGENOM" id="CLU_009925_1_1_1"/>
<dbReference type="InParanoid" id="Q01831"/>
<dbReference type="OMA" id="WVHIDAV"/>
<dbReference type="OrthoDB" id="300780at2759"/>
<dbReference type="PAN-GO" id="Q01831">
    <property type="GO annotations" value="7 GO annotations based on evolutionary models"/>
</dbReference>
<dbReference type="PhylomeDB" id="Q01831"/>
<dbReference type="TreeFam" id="TF101242"/>
<dbReference type="PathwayCommons" id="Q01831"/>
<dbReference type="Reactome" id="R-HSA-3108214">
    <property type="pathway name" value="SUMOylation of DNA damage response and repair proteins"/>
</dbReference>
<dbReference type="Reactome" id="R-HSA-5696394">
    <property type="pathway name" value="DNA Damage Recognition in GG-NER"/>
</dbReference>
<dbReference type="Reactome" id="R-HSA-5696395">
    <property type="pathway name" value="Formation of Incision Complex in GG-NER"/>
</dbReference>
<dbReference type="SignaLink" id="Q01831"/>
<dbReference type="SIGNOR" id="Q01831"/>
<dbReference type="BioGRID-ORCS" id="7508">
    <property type="hits" value="14 hits in 1160 CRISPR screens"/>
</dbReference>
<dbReference type="ChiTaRS" id="XPC">
    <property type="organism name" value="human"/>
</dbReference>
<dbReference type="GeneWiki" id="XPC_(gene)"/>
<dbReference type="GenomeRNAi" id="7508"/>
<dbReference type="Pharos" id="Q01831">
    <property type="development level" value="Tbio"/>
</dbReference>
<dbReference type="PRO" id="PR:Q01831"/>
<dbReference type="Proteomes" id="UP000005640">
    <property type="component" value="Chromosome 3"/>
</dbReference>
<dbReference type="RNAct" id="Q01831">
    <property type="molecule type" value="protein"/>
</dbReference>
<dbReference type="Bgee" id="ENSG00000154767">
    <property type="expression patterns" value="Expressed in sural nerve and 204 other cell types or tissues"/>
</dbReference>
<dbReference type="ExpressionAtlas" id="Q01831">
    <property type="expression patterns" value="baseline and differential"/>
</dbReference>
<dbReference type="GO" id="GO:0000785">
    <property type="term" value="C:chromatin"/>
    <property type="evidence" value="ECO:0000250"/>
    <property type="project" value="UniProt"/>
</dbReference>
<dbReference type="GO" id="GO:0005737">
    <property type="term" value="C:cytoplasm"/>
    <property type="evidence" value="ECO:0000314"/>
    <property type="project" value="UniProtKB"/>
</dbReference>
<dbReference type="GO" id="GO:0005829">
    <property type="term" value="C:cytosol"/>
    <property type="evidence" value="ECO:0000314"/>
    <property type="project" value="HPA"/>
</dbReference>
<dbReference type="GO" id="GO:0043231">
    <property type="term" value="C:intracellular membrane-bounded organelle"/>
    <property type="evidence" value="ECO:0000314"/>
    <property type="project" value="HPA"/>
</dbReference>
<dbReference type="GO" id="GO:0005739">
    <property type="term" value="C:mitochondrion"/>
    <property type="evidence" value="ECO:0000314"/>
    <property type="project" value="HPA"/>
</dbReference>
<dbReference type="GO" id="GO:0005730">
    <property type="term" value="C:nucleolus"/>
    <property type="evidence" value="ECO:0000314"/>
    <property type="project" value="HPA"/>
</dbReference>
<dbReference type="GO" id="GO:0005654">
    <property type="term" value="C:nucleoplasm"/>
    <property type="evidence" value="ECO:0000314"/>
    <property type="project" value="HPA"/>
</dbReference>
<dbReference type="GO" id="GO:0000109">
    <property type="term" value="C:nucleotide-excision repair complex"/>
    <property type="evidence" value="ECO:0000314"/>
    <property type="project" value="UniProtKB"/>
</dbReference>
<dbReference type="GO" id="GO:0000111">
    <property type="term" value="C:nucleotide-excision repair factor 2 complex"/>
    <property type="evidence" value="ECO:0000318"/>
    <property type="project" value="GO_Central"/>
</dbReference>
<dbReference type="GO" id="GO:0005634">
    <property type="term" value="C:nucleus"/>
    <property type="evidence" value="ECO:0000314"/>
    <property type="project" value="UniProtKB"/>
</dbReference>
<dbReference type="GO" id="GO:0005886">
    <property type="term" value="C:plasma membrane"/>
    <property type="evidence" value="ECO:0000314"/>
    <property type="project" value="HPA"/>
</dbReference>
<dbReference type="GO" id="GO:0090734">
    <property type="term" value="C:site of DNA damage"/>
    <property type="evidence" value="ECO:0007669"/>
    <property type="project" value="Ensembl"/>
</dbReference>
<dbReference type="GO" id="GO:0071942">
    <property type="term" value="C:XPC complex"/>
    <property type="evidence" value="ECO:0000314"/>
    <property type="project" value="UniProtKB"/>
</dbReference>
<dbReference type="GO" id="GO:0000405">
    <property type="term" value="F:bubble DNA binding"/>
    <property type="evidence" value="ECO:0000304"/>
    <property type="project" value="UniProtKB"/>
</dbReference>
<dbReference type="GO" id="GO:0003684">
    <property type="term" value="F:damaged DNA binding"/>
    <property type="evidence" value="ECO:0000314"/>
    <property type="project" value="UniProtKB"/>
</dbReference>
<dbReference type="GO" id="GO:0140612">
    <property type="term" value="F:DNA damage sensor activity"/>
    <property type="evidence" value="ECO:0000314"/>
    <property type="project" value="GO_Central"/>
</dbReference>
<dbReference type="GO" id="GO:0000404">
    <property type="term" value="F:heteroduplex DNA loop binding"/>
    <property type="evidence" value="ECO:0000304"/>
    <property type="project" value="UniProtKB"/>
</dbReference>
<dbReference type="GO" id="GO:0044877">
    <property type="term" value="F:protein-containing complex binding"/>
    <property type="evidence" value="ECO:0000314"/>
    <property type="project" value="UniProtKB"/>
</dbReference>
<dbReference type="GO" id="GO:0061629">
    <property type="term" value="F:RNA polymerase II-specific DNA-binding transcription factor binding"/>
    <property type="evidence" value="ECO:0007669"/>
    <property type="project" value="Ensembl"/>
</dbReference>
<dbReference type="GO" id="GO:0003697">
    <property type="term" value="F:single-stranded DNA binding"/>
    <property type="evidence" value="ECO:0000314"/>
    <property type="project" value="UniProtKB"/>
</dbReference>
<dbReference type="GO" id="GO:0003713">
    <property type="term" value="F:transcription coactivator activity"/>
    <property type="evidence" value="ECO:0000314"/>
    <property type="project" value="UniProtKB"/>
</dbReference>
<dbReference type="GO" id="GO:0006281">
    <property type="term" value="P:DNA repair"/>
    <property type="evidence" value="ECO:0000304"/>
    <property type="project" value="ProtInc"/>
</dbReference>
<dbReference type="GO" id="GO:0006298">
    <property type="term" value="P:mismatch repair"/>
    <property type="evidence" value="ECO:0000318"/>
    <property type="project" value="GO_Central"/>
</dbReference>
<dbReference type="GO" id="GO:0031573">
    <property type="term" value="P:mitotic intra-S DNA damage checkpoint signaling"/>
    <property type="evidence" value="ECO:0007669"/>
    <property type="project" value="Ensembl"/>
</dbReference>
<dbReference type="GO" id="GO:0006289">
    <property type="term" value="P:nucleotide-excision repair"/>
    <property type="evidence" value="ECO:0000314"/>
    <property type="project" value="UniProtKB"/>
</dbReference>
<dbReference type="GO" id="GO:0045893">
    <property type="term" value="P:positive regulation of DNA-templated transcription"/>
    <property type="evidence" value="ECO:0000314"/>
    <property type="project" value="UniProtKB"/>
</dbReference>
<dbReference type="GO" id="GO:0000720">
    <property type="term" value="P:pyrimidine dimer repair by nucleotide-excision repair"/>
    <property type="evidence" value="ECO:0007669"/>
    <property type="project" value="Ensembl"/>
</dbReference>
<dbReference type="GO" id="GO:1901990">
    <property type="term" value="P:regulation of mitotic cell cycle phase transition"/>
    <property type="evidence" value="ECO:0000315"/>
    <property type="project" value="UniProtKB"/>
</dbReference>
<dbReference type="GO" id="GO:0010996">
    <property type="term" value="P:response to auditory stimulus"/>
    <property type="evidence" value="ECO:0007669"/>
    <property type="project" value="Ensembl"/>
</dbReference>
<dbReference type="GO" id="GO:0010224">
    <property type="term" value="P:response to UV-B"/>
    <property type="evidence" value="ECO:0007669"/>
    <property type="project" value="Ensembl"/>
</dbReference>
<dbReference type="GO" id="GO:0009410">
    <property type="term" value="P:response to xenobiotic stimulus"/>
    <property type="evidence" value="ECO:0007669"/>
    <property type="project" value="Ensembl"/>
</dbReference>
<dbReference type="GO" id="GO:0070914">
    <property type="term" value="P:UV-damage excision repair"/>
    <property type="evidence" value="ECO:0000314"/>
    <property type="project" value="CACAO"/>
</dbReference>
<dbReference type="DisProt" id="DP01626"/>
<dbReference type="FunFam" id="2.20.20.110:FF:000001">
    <property type="entry name" value="DNA repair protein complementing XP-C cells"/>
    <property type="match status" value="1"/>
</dbReference>
<dbReference type="FunFam" id="3.30.70.2460:FF:000001">
    <property type="entry name" value="DNA repair protein Rad4 family"/>
    <property type="match status" value="1"/>
</dbReference>
<dbReference type="FunFam" id="3.90.260.10:FF:000003">
    <property type="entry name" value="XPC complex subunit, DNA damage recognition and repair factor"/>
    <property type="match status" value="1"/>
</dbReference>
<dbReference type="FunFam" id="3.90.260.10:FF:000018">
    <property type="entry name" value="XPC complex subunit, DNA damage recognition and repair factor"/>
    <property type="match status" value="1"/>
</dbReference>
<dbReference type="Gene3D" id="2.20.20.110">
    <property type="entry name" value="Rad4, beta-hairpin domain BHD1"/>
    <property type="match status" value="1"/>
</dbReference>
<dbReference type="Gene3D" id="3.30.70.2460">
    <property type="entry name" value="Rad4, beta-hairpin domain BHD3"/>
    <property type="match status" value="1"/>
</dbReference>
<dbReference type="Gene3D" id="3.90.260.10">
    <property type="entry name" value="Transglutaminase-like"/>
    <property type="match status" value="2"/>
</dbReference>
<dbReference type="IDEAL" id="IID00164"/>
<dbReference type="InterPro" id="IPR018327">
    <property type="entry name" value="BHD_2"/>
</dbReference>
<dbReference type="InterPro" id="IPR004583">
    <property type="entry name" value="DNA_repair_Rad4"/>
</dbReference>
<dbReference type="InterPro" id="IPR018026">
    <property type="entry name" value="DNA_repair_Rad4-like"/>
</dbReference>
<dbReference type="InterPro" id="IPR038765">
    <property type="entry name" value="Papain-like_cys_pep_sf"/>
</dbReference>
<dbReference type="InterPro" id="IPR018325">
    <property type="entry name" value="Rad4/PNGase_transGLS-fold"/>
</dbReference>
<dbReference type="InterPro" id="IPR018326">
    <property type="entry name" value="Rad4_beta-hairpin_dom1"/>
</dbReference>
<dbReference type="InterPro" id="IPR018328">
    <property type="entry name" value="Rad4_beta-hairpin_dom3"/>
</dbReference>
<dbReference type="InterPro" id="IPR042488">
    <property type="entry name" value="Rad4_BHD3_sf"/>
</dbReference>
<dbReference type="InterPro" id="IPR036985">
    <property type="entry name" value="Transglutaminase-like_sf"/>
</dbReference>
<dbReference type="NCBIfam" id="TIGR00605">
    <property type="entry name" value="rad4"/>
    <property type="match status" value="1"/>
</dbReference>
<dbReference type="PANTHER" id="PTHR12135:SF0">
    <property type="entry name" value="DNA REPAIR PROTEIN COMPLEMENTING XP-C CELLS"/>
    <property type="match status" value="1"/>
</dbReference>
<dbReference type="PANTHER" id="PTHR12135">
    <property type="entry name" value="DNA REPAIR PROTEIN XP-C / RAD4"/>
    <property type="match status" value="1"/>
</dbReference>
<dbReference type="Pfam" id="PF10403">
    <property type="entry name" value="BHD_1"/>
    <property type="match status" value="1"/>
</dbReference>
<dbReference type="Pfam" id="PF10404">
    <property type="entry name" value="BHD_2"/>
    <property type="match status" value="1"/>
</dbReference>
<dbReference type="Pfam" id="PF10405">
    <property type="entry name" value="BHD_3"/>
    <property type="match status" value="1"/>
</dbReference>
<dbReference type="Pfam" id="PF03835">
    <property type="entry name" value="Rad4"/>
    <property type="match status" value="1"/>
</dbReference>
<dbReference type="SMART" id="SM01030">
    <property type="entry name" value="BHD_1"/>
    <property type="match status" value="1"/>
</dbReference>
<dbReference type="SMART" id="SM01031">
    <property type="entry name" value="BHD_2"/>
    <property type="match status" value="1"/>
</dbReference>
<dbReference type="SMART" id="SM01032">
    <property type="entry name" value="BHD_3"/>
    <property type="match status" value="1"/>
</dbReference>
<dbReference type="SUPFAM" id="SSF54001">
    <property type="entry name" value="Cysteine proteinases"/>
    <property type="match status" value="1"/>
</dbReference>
<name>XPC_HUMAN</name>
<feature type="initiator methionine" description="Removed" evidence="29">
    <location>
        <position position="1"/>
    </location>
</feature>
<feature type="chain" id="PRO_0000218293" description="DNA repair protein complementing XP-C cells">
    <location>
        <begin position="2"/>
        <end position="940"/>
    </location>
</feature>
<feature type="region of interest" description="Disordered" evidence="2">
    <location>
        <begin position="1"/>
        <end position="78"/>
    </location>
</feature>
<feature type="region of interest" description="Disordered" evidence="2">
    <location>
        <begin position="111"/>
        <end position="136"/>
    </location>
</feature>
<feature type="region of interest" description="Disordered" evidence="2">
    <location>
        <begin position="327"/>
        <end position="519"/>
    </location>
</feature>
<feature type="region of interest" description="Interaction with RAD23B">
    <location>
        <begin position="496"/>
        <end position="734"/>
    </location>
</feature>
<feature type="region of interest" description="Minimal sensor domain involved in damage recognition">
    <location>
        <begin position="607"/>
        <end position="766"/>
    </location>
</feature>
<feature type="region of interest" description="DNA-binding; preference for heteroduplex DNA">
    <location>
        <begin position="607"/>
        <end position="741"/>
    </location>
</feature>
<feature type="region of interest" description="DNA-binding; preference for single stranded DNA; required for formation of stable nucleoprotein complex">
    <location>
        <begin position="767"/>
        <end position="831"/>
    </location>
</feature>
<feature type="region of interest" description="Interaction with ERCC2 and GTF2H1" evidence="10">
    <location>
        <begin position="816"/>
        <end position="940"/>
    </location>
</feature>
<feature type="region of interest" description="Interaction with CETN2">
    <location>
        <begin position="847"/>
        <end position="866"/>
    </location>
</feature>
<feature type="region of interest" description="Disordered" evidence="2">
    <location>
        <begin position="866"/>
        <end position="940"/>
    </location>
</feature>
<feature type="short sequence motif" description="Nuclear localization signal" evidence="1">
    <location>
        <begin position="390"/>
        <end position="395"/>
    </location>
</feature>
<feature type="compositionally biased region" description="Acidic residues" evidence="2">
    <location>
        <begin position="121"/>
        <end position="136"/>
    </location>
</feature>
<feature type="compositionally biased region" description="Polar residues" evidence="2">
    <location>
        <begin position="346"/>
        <end position="355"/>
    </location>
</feature>
<feature type="compositionally biased region" description="Basic residues" evidence="2">
    <location>
        <begin position="381"/>
        <end position="395"/>
    </location>
</feature>
<feature type="compositionally biased region" description="Low complexity" evidence="2">
    <location>
        <begin position="437"/>
        <end position="453"/>
    </location>
</feature>
<feature type="compositionally biased region" description="Basic residues" evidence="2">
    <location>
        <begin position="916"/>
        <end position="927"/>
    </location>
</feature>
<feature type="modified residue" description="Phosphoserine" evidence="38 39 40 41 43">
    <location>
        <position position="94"/>
    </location>
</feature>
<feature type="modified residue" description="Phosphoserine" evidence="38 40">
    <location>
        <position position="129"/>
    </location>
</feature>
<feature type="modified residue" description="Phosphoserine" evidence="43">
    <location>
        <position position="140"/>
    </location>
</feature>
<feature type="modified residue" description="Phosphothreonine" evidence="39">
    <location>
        <position position="169"/>
    </location>
</feature>
<feature type="modified residue" description="Phosphoserine" evidence="43">
    <location>
        <position position="397"/>
    </location>
</feature>
<feature type="modified residue" description="Phosphoserine" evidence="43">
    <location>
        <position position="398"/>
    </location>
</feature>
<feature type="modified residue" description="Phosphoserine" evidence="43">
    <location>
        <position position="399"/>
    </location>
</feature>
<feature type="modified residue" description="Phosphoserine" evidence="43">
    <location>
        <position position="453"/>
    </location>
</feature>
<feature type="modified residue" description="Phosphoserine" evidence="43">
    <location>
        <position position="460"/>
    </location>
</feature>
<feature type="modified residue" description="Phosphothreonine" evidence="41">
    <location>
        <position position="876"/>
    </location>
</feature>
<feature type="modified residue" description="Phosphoserine" evidence="39 40 41 42 43">
    <location>
        <position position="883"/>
    </location>
</feature>
<feature type="modified residue" description="Phosphoserine" evidence="39 40 41 42 43">
    <location>
        <position position="884"/>
    </location>
</feature>
<feature type="modified residue" description="Phosphoserine" evidence="39">
    <location>
        <position position="891"/>
    </location>
</feature>
<feature type="modified residue" description="Phosphoserine" evidence="43">
    <location>
        <position position="903"/>
    </location>
</feature>
<feature type="cross-link" description="Glycyl lysine isopeptide (Lys-Gly) (interchain with G-Cter in SUMO2)" evidence="46">
    <location>
        <position position="41"/>
    </location>
</feature>
<feature type="cross-link" description="Glycyl lysine isopeptide (Lys-Gly) (interchain with G-Cter in SUMO2)" evidence="44 45 46">
    <location>
        <position position="81"/>
    </location>
</feature>
<feature type="cross-link" description="Glycyl lysine isopeptide (Lys-Gly) (interchain with G-Cter in SUMO2)" evidence="46">
    <location>
        <position position="89"/>
    </location>
</feature>
<feature type="cross-link" description="Glycyl lysine isopeptide (Lys-Gly) (interchain with G-Cter in SUMO2)" evidence="46">
    <location>
        <position position="161"/>
    </location>
</feature>
<feature type="splice variant" id="VSP_046344" description="In isoform 2." evidence="35">
    <location>
        <begin position="136"/>
        <end position="172"/>
    </location>
</feature>
<feature type="splice variant" id="VSP_055890" description="In isoform 3." evidence="36">
    <original>ELS</original>
    <variation>VKR</variation>
    <location>
        <begin position="138"/>
        <end position="140"/>
    </location>
</feature>
<feature type="splice variant" id="VSP_055891" description="In isoform 3." evidence="36">
    <location>
        <begin position="141"/>
        <end position="940"/>
    </location>
</feature>
<feature type="sequence variant" id="VAR_018894" description="In dbSNP:rs1870134." evidence="34">
    <original>L</original>
    <variation>V</variation>
    <location>
        <position position="16"/>
    </location>
</feature>
<feature type="sequence variant" id="VAR_018895" description="In dbSNP:rs2229089." evidence="34">
    <original>L</original>
    <variation>F</variation>
    <location>
        <position position="48"/>
    </location>
</feature>
<feature type="sequence variant" id="VAR_018896" description="In dbSNP:rs3731063." evidence="34">
    <original>K</original>
    <variation>R</variation>
    <location>
        <position position="86"/>
    </location>
</feature>
<feature type="sequence variant" id="VAR_057475" description="In dbSNP:rs35629274.">
    <original>F</original>
    <variation>C</variation>
    <location>
        <position position="287"/>
    </location>
</feature>
<feature type="sequence variant" id="VAR_018897" description="In dbSNP:rs3731126." evidence="34">
    <original>R</original>
    <variation>Q</variation>
    <location>
        <position position="314"/>
    </location>
</feature>
<feature type="sequence variant" id="VAR_005846" description="In XP-C; severe; does not affect interaction with KAT2A and transcription coactivator activity in absence of DNA damage; dbSNP:rs74737358." evidence="27 30">
    <original>P</original>
    <variation>H</variation>
    <location>
        <position position="334"/>
    </location>
</feature>
<feature type="sequence variant" id="VAR_018898" description="In dbSNP:rs2227999." evidence="34">
    <original>R</original>
    <variation>H</variation>
    <location>
        <position position="492"/>
    </location>
</feature>
<feature type="sequence variant" id="VAR_018899" description="In dbSNP:rs2228000." evidence="8 29 34">
    <original>A</original>
    <variation>V</variation>
    <location>
        <position position="499"/>
    </location>
</feature>
<feature type="sequence variant" id="VAR_059963" description="In dbSNP:rs6413541.">
    <original>K</original>
    <variation>Q</variation>
    <location>
        <position position="511"/>
    </location>
</feature>
<feature type="sequence variant" id="VAR_018900" description="In dbSNP:rs3731130." evidence="34">
    <original>M</original>
    <variation>I</variation>
    <location>
        <position position="513"/>
    </location>
</feature>
<feature type="sequence variant" id="VAR_057476" description="In dbSNP:rs3731130.">
    <original>C</original>
    <variation>S</variation>
    <location>
        <position position="514"/>
    </location>
</feature>
<feature type="sequence variant" id="VAR_018901" description="In dbSNP:rs3731139." evidence="34">
    <original>Q</original>
    <variation>E</variation>
    <location>
        <position position="632"/>
    </location>
</feature>
<feature type="sequence variant" id="VAR_018902" description="In dbSNP:rs3731140." evidence="34">
    <original>R</original>
    <variation>H</variation>
    <location>
        <position position="671"/>
    </location>
</feature>
<feature type="sequence variant" id="VAR_018903" description="In dbSNP:rs3731152." evidence="34">
    <original>T</original>
    <variation>M</variation>
    <location>
        <position position="689"/>
    </location>
</feature>
<feature type="sequence variant" id="VAR_064039" description="In XP-C; diminishes repair activity and impairs DNA binding." evidence="5 17 18 21">
    <original>W</original>
    <variation>S</variation>
    <location>
        <position position="690"/>
    </location>
</feature>
<feature type="sequence variant" id="VAR_005847" description="In XP-C; mild." evidence="30">
    <original>V</original>
    <variation>VV</variation>
    <location>
        <position position="697"/>
    </location>
</feature>
<feature type="sequence variant" id="VAR_018904" description="In dbSNP:rs3731177." evidence="34">
    <original>K</original>
    <variation>Q</variation>
    <location>
        <position position="928"/>
    </location>
</feature>
<feature type="sequence variant" id="VAR_005848" description="In dbSNP:rs2228001." evidence="8 29 34">
    <original>Q</original>
    <variation>K</variation>
    <location>
        <position position="939"/>
    </location>
</feature>
<feature type="mutagenesis site" description="Slightly diminishes repair activity and slightly impairs DNA binding." evidence="21">
    <original>W</original>
    <variation>A</variation>
    <location>
        <position position="531"/>
    </location>
</feature>
<feature type="mutagenesis site" description="Slightly diminishes repair activity and slightly impairs DNA binding." evidence="21">
    <original>W</original>
    <variation>A</variation>
    <location>
        <position position="542"/>
    </location>
</feature>
<feature type="mutagenesis site" description="Diminishes repair activity and impairs DNA binding." evidence="17 21">
    <original>F</original>
    <variation>A</variation>
    <location>
        <position position="733"/>
    </location>
</feature>
<feature type="mutagenesis site" description="Reduces DNA repair activity; abolishes single-stranded DNA binding; reduces binding to homoduplex DNA; reduces localization at DNA damaged foci." evidence="24">
    <original>N</original>
    <variation>A</variation>
    <location>
        <position position="754"/>
    </location>
</feature>
<feature type="mutagenesis site" description="Reduces nuclear mobility and impairs repair activity." evidence="21">
    <original>E</original>
    <variation>K</variation>
    <location>
        <position position="755"/>
    </location>
</feature>
<feature type="mutagenesis site" description="Reduces DNA repair activity; abolishes single-stranded DNA binding; reduces binding to homoduplex DNA; reduces localization at DNA damaged foci." evidence="24">
    <original>F</original>
    <variation>A</variation>
    <location>
        <position position="756"/>
    </location>
</feature>
<feature type="mutagenesis site" description="Reduces DNA repair activity; abolishes single-stranded DNA binding; reduces binding to homoduplex DNA; reduces localization at DNA damaged foci; decreases recruitment of TFIIH complex to lesion sites." evidence="24">
    <original>F</original>
    <variation>A</variation>
    <location>
        <position position="797"/>
    </location>
</feature>
<feature type="mutagenesis site" description="Reduces DNA repair activity; abolishes single-stranded DNA binding; reduces binding to homoduplex DNA; greatly reduces localization at DNA damaged foci; decreases recruitment of TFIIH complex to lesion sites." evidence="24">
    <original>F</original>
    <variation>A</variation>
    <location>
        <position position="799"/>
    </location>
</feature>
<feature type="mutagenesis site" description="Reduces NER activity and abolishes interaction with CETN2; when associated with A-851 and A-855." evidence="14">
    <original>W</original>
    <variation>A</variation>
    <location>
        <position position="848"/>
    </location>
</feature>
<feature type="mutagenesis site" description="Reduces NER activity and abolishes interaction with CETN2; when associated with A-848 and A-855." evidence="14">
    <original>L</original>
    <variation>A</variation>
    <location>
        <position position="851"/>
    </location>
</feature>
<feature type="mutagenesis site" description="Reduces NER activity and abolishes interaction with CETN2; when associated with A-848 and A-851." evidence="14">
    <original>L</original>
    <variation>A</variation>
    <location>
        <position position="855"/>
    </location>
</feature>
<feature type="sequence conflict" description="In Ref. 5; BAG58555." evidence="37" ref="5">
    <original>E</original>
    <variation>Q</variation>
    <location>
        <position position="135"/>
    </location>
</feature>
<feature type="sequence conflict" description="In Ref. 5; BAG58555." evidence="37" ref="5">
    <original>G</original>
    <variation>E</variation>
    <location>
        <position position="489"/>
    </location>
</feature>
<feature type="turn" evidence="48">
    <location>
        <begin position="120"/>
        <end position="123"/>
    </location>
</feature>
<feature type="strand" evidence="48">
    <location>
        <begin position="124"/>
        <end position="126"/>
    </location>
</feature>
<feature type="strand" evidence="48">
    <location>
        <begin position="134"/>
        <end position="137"/>
    </location>
</feature>
<feature type="helix" evidence="48">
    <location>
        <begin position="150"/>
        <end position="153"/>
    </location>
</feature>
<feature type="helix" evidence="47">
    <location>
        <begin position="848"/>
        <end position="861"/>
    </location>
</feature>
<feature type="helix" evidence="49">
    <location>
        <begin position="890"/>
        <end position="901"/>
    </location>
</feature>
<feature type="turn" evidence="49">
    <location>
        <begin position="905"/>
        <end position="908"/>
    </location>
</feature>
<feature type="helix" evidence="49">
    <location>
        <begin position="909"/>
        <end position="915"/>
    </location>
</feature>
<feature type="helix" evidence="49">
    <location>
        <begin position="936"/>
        <end position="938"/>
    </location>
</feature>
<protein>
    <recommendedName>
        <fullName>DNA repair protein complementing XP-C cells</fullName>
    </recommendedName>
    <alternativeName>
        <fullName>Xeroderma pigmentosum group C-complementing protein</fullName>
    </alternativeName>
    <alternativeName>
        <fullName>p125</fullName>
    </alternativeName>
</protein>
<sequence length="940" mass="105953">MARKRAAGGEPRGRELRSQKSKAKSKARREEEEEDAFEDEKPPKKSLLSKVSQGKRKRGCSHPGGSADGPAKKKVAKVTVKSENLKVIKDEALSDGDDLRDFPSDLKKAHHLKRGATMNEDSNEEEEESENDWEEVEELSEPVLGDVRESTAFSRSLLPVKPVEIEIETPEQAKTRERSEKIKLEFETYLRRAMKRFNKGVHEDTHKVHLLCLLANGFYRNNICSQPDLHAIGLSIIPARFTRVLPRDVDTYYLSNLVKWFIGTFTVNAELSASEQDNLQTTLERRFAIYSARDDEELVHIFLLILRALQLLTRLVLSLQPIPLKSATAKGKKPSKERLTADPGGSSETSSQVLENHTKPKTSKGTKQEETFAKGTCRPSAKGKRNKGGRKKRSKPSSSEEDEGPGDKQEKATQRRPHGRERRVASRVSYKEESGSDEAGSGSDFELSSGEASDPSDEDSEPGPPKQRKAPAPQRTKAGSKSASRTHRGSHRKDPSLPAASSSSSSSKRGKKMCSDGEKAEKRSIAGIDQWLEVFCEQEEKWVCVDCVHGVVGQPLTCYKYATKPMTYVVGIDSDGWVRDVTQRYDPVWMTVTRKCRVDAEWWAETLRPYQSPFMDREKKEDLEFQAKHMDQPLPTAIGLYKNHPLYALKRHLLKYEAIYPETAAILGYCRGEAVYSRDCVHTLHSRDTWLKKARVVRLGEVPYKMVKGFSNRARKARLAEPQLREENDLGLFGYWQTEEYQPPVAVDGKVPRNEFGNVYLFLPSMMPIGCVQLNLPNLHRVARKLDIDCVQAITGFDFHGGYSHPVTDGYIVCEEFKDVLLTAWENEQAVIERKEKEKKEKRALGNWKLLAKGLLIRERLKRRYGPKSEAAAPHTDAGGGLSSDEEEGTSSQAEAARILAASWPQNREDEEKQKLKGGPKKTKREKKAAASHLFPFEQL</sequence>
<keyword id="KW-0002">3D-structure</keyword>
<keyword id="KW-0025">Alternative splicing</keyword>
<keyword id="KW-0158">Chromosome</keyword>
<keyword id="KW-0963">Cytoplasm</keyword>
<keyword id="KW-0903">Direct protein sequencing</keyword>
<keyword id="KW-0225">Disease variant</keyword>
<keyword id="KW-0227">DNA damage</keyword>
<keyword id="KW-0234">DNA repair</keyword>
<keyword id="KW-0238">DNA-binding</keyword>
<keyword id="KW-1017">Isopeptide bond</keyword>
<keyword id="KW-0539">Nucleus</keyword>
<keyword id="KW-0597">Phosphoprotein</keyword>
<keyword id="KW-1267">Proteomics identification</keyword>
<keyword id="KW-1185">Reference proteome</keyword>
<keyword id="KW-0804">Transcription</keyword>
<keyword id="KW-0805">Transcription regulation</keyword>
<keyword id="KW-0832">Ubl conjugation</keyword>
<keyword id="KW-0857">Xeroderma pigmentosum</keyword>
<reference key="1">
    <citation type="journal article" date="1994" name="EMBO J.">
        <title>Purification and cloning of a nucleotide excision repair complex involving the Xeroderma pigmentosum group C protein and a human homologue of yeast RAD23.</title>
        <authorList>
            <person name="Masutani C."/>
            <person name="Sugasawa K."/>
            <person name="Yanagisawa J."/>
            <person name="Sonoyama T."/>
            <person name="Ui M."/>
            <person name="Enomoto T."/>
            <person name="Takio K."/>
            <person name="Tanaka K."/>
            <person name="van der Spek P.J."/>
            <person name="Bootsma D."/>
            <person name="Hoeijmakers J.H.J."/>
            <person name="Hanaoka F."/>
        </authorList>
    </citation>
    <scope>NUCLEOTIDE SEQUENCE [MRNA] (ISOFORM 1)</scope>
    <scope>PROTEIN SEQUENCE OF 2-55</scope>
    <scope>VARIANTS VAL-499 AND LYS-939</scope>
</reference>
<reference key="2">
    <citation type="journal article" date="2002" name="Nucleic Acids Res.">
        <title>The human XPC DNA repair gene: arrangement, splice site information content and influence of a single nucleotide polymorphism in a splice acceptor site on alternative splicing and function.</title>
        <authorList>
            <person name="Khan S.G."/>
            <person name="Muniz-Medina V."/>
            <person name="Shahlavi T."/>
            <person name="Baker C.C."/>
            <person name="Inui H."/>
            <person name="Ueda T."/>
            <person name="Emmert S."/>
            <person name="Schneider T.D."/>
            <person name="Kraemer K.H."/>
        </authorList>
    </citation>
    <scope>NUCLEOTIDE SEQUENCE [GENOMIC DNA]</scope>
    <scope>VARIANTS VAL-499 AND LYS-939</scope>
    <scope>ALTERNATIVE SPLICING</scope>
</reference>
<reference key="3">
    <citation type="journal article" date="2014" name="Nat. Commun.">
        <title>Protein interaction network of alternatively spliced isoforms from brain links genetic risk factors for autism.</title>
        <authorList>
            <person name="Corominas R."/>
            <person name="Yang X."/>
            <person name="Lin G.N."/>
            <person name="Kang S."/>
            <person name="Shen Y."/>
            <person name="Ghamsari L."/>
            <person name="Broly M."/>
            <person name="Rodriguez M."/>
            <person name="Tam S."/>
            <person name="Wanamaker S.A."/>
            <person name="Fan C."/>
            <person name="Yi S."/>
            <person name="Tasan M."/>
            <person name="Lemmens I."/>
            <person name="Kuang X."/>
            <person name="Zhao N."/>
            <person name="Malhotra D."/>
            <person name="Michaelson J.J."/>
            <person name="Vacic V."/>
            <person name="Calderwood M.A."/>
            <person name="Roth F.P."/>
            <person name="Tavernier J."/>
            <person name="Horvath S."/>
            <person name="Salehi-Ashtiani K."/>
            <person name="Korkin D."/>
            <person name="Sebat J."/>
            <person name="Hill D.E."/>
            <person name="Hao T."/>
            <person name="Vidal M."/>
            <person name="Iakoucheva L.M."/>
        </authorList>
    </citation>
    <scope>NUCLEOTIDE SEQUENCE [MRNA] (ISOFORM 3)</scope>
    <source>
        <tissue>Fetal brain</tissue>
    </source>
</reference>
<reference key="4">
    <citation type="submission" date="2002-07" db="EMBL/GenBank/DDBJ databases">
        <authorList>
            <consortium name="NIEHS SNPs program"/>
        </authorList>
    </citation>
    <scope>NUCLEOTIDE SEQUENCE [GENOMIC DNA]</scope>
    <scope>VARIANTS VAL-16; PHE-48; ARG-86; GLN-314; HIS-492; VAL-499; ILE-513; GLU-632; HIS-671; MET-689; GLN-928 AND LYS-939</scope>
</reference>
<reference key="5">
    <citation type="journal article" date="2004" name="Nat. Genet.">
        <title>Complete sequencing and characterization of 21,243 full-length human cDNAs.</title>
        <authorList>
            <person name="Ota T."/>
            <person name="Suzuki Y."/>
            <person name="Nishikawa T."/>
            <person name="Otsuki T."/>
            <person name="Sugiyama T."/>
            <person name="Irie R."/>
            <person name="Wakamatsu A."/>
            <person name="Hayashi K."/>
            <person name="Sato H."/>
            <person name="Nagai K."/>
            <person name="Kimura K."/>
            <person name="Makita H."/>
            <person name="Sekine M."/>
            <person name="Obayashi M."/>
            <person name="Nishi T."/>
            <person name="Shibahara T."/>
            <person name="Tanaka T."/>
            <person name="Ishii S."/>
            <person name="Yamamoto J."/>
            <person name="Saito K."/>
            <person name="Kawai Y."/>
            <person name="Isono Y."/>
            <person name="Nakamura Y."/>
            <person name="Nagahari K."/>
            <person name="Murakami K."/>
            <person name="Yasuda T."/>
            <person name="Iwayanagi T."/>
            <person name="Wagatsuma M."/>
            <person name="Shiratori A."/>
            <person name="Sudo H."/>
            <person name="Hosoiri T."/>
            <person name="Kaku Y."/>
            <person name="Kodaira H."/>
            <person name="Kondo H."/>
            <person name="Sugawara M."/>
            <person name="Takahashi M."/>
            <person name="Kanda K."/>
            <person name="Yokoi T."/>
            <person name="Furuya T."/>
            <person name="Kikkawa E."/>
            <person name="Omura Y."/>
            <person name="Abe K."/>
            <person name="Kamihara K."/>
            <person name="Katsuta N."/>
            <person name="Sato K."/>
            <person name="Tanikawa M."/>
            <person name="Yamazaki M."/>
            <person name="Ninomiya K."/>
            <person name="Ishibashi T."/>
            <person name="Yamashita H."/>
            <person name="Murakawa K."/>
            <person name="Fujimori K."/>
            <person name="Tanai H."/>
            <person name="Kimata M."/>
            <person name="Watanabe M."/>
            <person name="Hiraoka S."/>
            <person name="Chiba Y."/>
            <person name="Ishida S."/>
            <person name="Ono Y."/>
            <person name="Takiguchi S."/>
            <person name="Watanabe S."/>
            <person name="Yosida M."/>
            <person name="Hotuta T."/>
            <person name="Kusano J."/>
            <person name="Kanehori K."/>
            <person name="Takahashi-Fujii A."/>
            <person name="Hara H."/>
            <person name="Tanase T.-O."/>
            <person name="Nomura Y."/>
            <person name="Togiya S."/>
            <person name="Komai F."/>
            <person name="Hara R."/>
            <person name="Takeuchi K."/>
            <person name="Arita M."/>
            <person name="Imose N."/>
            <person name="Musashino K."/>
            <person name="Yuuki H."/>
            <person name="Oshima A."/>
            <person name="Sasaki N."/>
            <person name="Aotsuka S."/>
            <person name="Yoshikawa Y."/>
            <person name="Matsunawa H."/>
            <person name="Ichihara T."/>
            <person name="Shiohata N."/>
            <person name="Sano S."/>
            <person name="Moriya S."/>
            <person name="Momiyama H."/>
            <person name="Satoh N."/>
            <person name="Takami S."/>
            <person name="Terashima Y."/>
            <person name="Suzuki O."/>
            <person name="Nakagawa S."/>
            <person name="Senoh A."/>
            <person name="Mizoguchi H."/>
            <person name="Goto Y."/>
            <person name="Shimizu F."/>
            <person name="Wakebe H."/>
            <person name="Hishigaki H."/>
            <person name="Watanabe T."/>
            <person name="Sugiyama A."/>
            <person name="Takemoto M."/>
            <person name="Kawakami B."/>
            <person name="Yamazaki M."/>
            <person name="Watanabe K."/>
            <person name="Kumagai A."/>
            <person name="Itakura S."/>
            <person name="Fukuzumi Y."/>
            <person name="Fujimori Y."/>
            <person name="Komiyama M."/>
            <person name="Tashiro H."/>
            <person name="Tanigami A."/>
            <person name="Fujiwara T."/>
            <person name="Ono T."/>
            <person name="Yamada K."/>
            <person name="Fujii Y."/>
            <person name="Ozaki K."/>
            <person name="Hirao M."/>
            <person name="Ohmori Y."/>
            <person name="Kawabata A."/>
            <person name="Hikiji T."/>
            <person name="Kobatake N."/>
            <person name="Inagaki H."/>
            <person name="Ikema Y."/>
            <person name="Okamoto S."/>
            <person name="Okitani R."/>
            <person name="Kawakami T."/>
            <person name="Noguchi S."/>
            <person name="Itoh T."/>
            <person name="Shigeta K."/>
            <person name="Senba T."/>
            <person name="Matsumura K."/>
            <person name="Nakajima Y."/>
            <person name="Mizuno T."/>
            <person name="Morinaga M."/>
            <person name="Sasaki M."/>
            <person name="Togashi T."/>
            <person name="Oyama M."/>
            <person name="Hata H."/>
            <person name="Watanabe M."/>
            <person name="Komatsu T."/>
            <person name="Mizushima-Sugano J."/>
            <person name="Satoh T."/>
            <person name="Shirai Y."/>
            <person name="Takahashi Y."/>
            <person name="Nakagawa K."/>
            <person name="Okumura K."/>
            <person name="Nagase T."/>
            <person name="Nomura N."/>
            <person name="Kikuchi H."/>
            <person name="Masuho Y."/>
            <person name="Yamashita R."/>
            <person name="Nakai K."/>
            <person name="Yada T."/>
            <person name="Nakamura Y."/>
            <person name="Ohara O."/>
            <person name="Isogai T."/>
            <person name="Sugano S."/>
        </authorList>
    </citation>
    <scope>NUCLEOTIDE SEQUENCE [LARGE SCALE MRNA] (ISOFORM 2)</scope>
    <source>
        <tissue>Hippocampus</tissue>
    </source>
</reference>
<reference key="6">
    <citation type="journal article" date="2006" name="Nature">
        <title>The DNA sequence, annotation and analysis of human chromosome 3.</title>
        <authorList>
            <person name="Muzny D.M."/>
            <person name="Scherer S.E."/>
            <person name="Kaul R."/>
            <person name="Wang J."/>
            <person name="Yu J."/>
            <person name="Sudbrak R."/>
            <person name="Buhay C.J."/>
            <person name="Chen R."/>
            <person name="Cree A."/>
            <person name="Ding Y."/>
            <person name="Dugan-Rocha S."/>
            <person name="Gill R."/>
            <person name="Gunaratne P."/>
            <person name="Harris R.A."/>
            <person name="Hawes A.C."/>
            <person name="Hernandez J."/>
            <person name="Hodgson A.V."/>
            <person name="Hume J."/>
            <person name="Jackson A."/>
            <person name="Khan Z.M."/>
            <person name="Kovar-Smith C."/>
            <person name="Lewis L.R."/>
            <person name="Lozado R.J."/>
            <person name="Metzker M.L."/>
            <person name="Milosavljevic A."/>
            <person name="Miner G.R."/>
            <person name="Morgan M.B."/>
            <person name="Nazareth L.V."/>
            <person name="Scott G."/>
            <person name="Sodergren E."/>
            <person name="Song X.-Z."/>
            <person name="Steffen D."/>
            <person name="Wei S."/>
            <person name="Wheeler D.A."/>
            <person name="Wright M.W."/>
            <person name="Worley K.C."/>
            <person name="Yuan Y."/>
            <person name="Zhang Z."/>
            <person name="Adams C.Q."/>
            <person name="Ansari-Lari M.A."/>
            <person name="Ayele M."/>
            <person name="Brown M.J."/>
            <person name="Chen G."/>
            <person name="Chen Z."/>
            <person name="Clendenning J."/>
            <person name="Clerc-Blankenburg K.P."/>
            <person name="Chen R."/>
            <person name="Chen Z."/>
            <person name="Davis C."/>
            <person name="Delgado O."/>
            <person name="Dinh H.H."/>
            <person name="Dong W."/>
            <person name="Draper H."/>
            <person name="Ernst S."/>
            <person name="Fu G."/>
            <person name="Gonzalez-Garay M.L."/>
            <person name="Garcia D.K."/>
            <person name="Gillett W."/>
            <person name="Gu J."/>
            <person name="Hao B."/>
            <person name="Haugen E."/>
            <person name="Havlak P."/>
            <person name="He X."/>
            <person name="Hennig S."/>
            <person name="Hu S."/>
            <person name="Huang W."/>
            <person name="Jackson L.R."/>
            <person name="Jacob L.S."/>
            <person name="Kelly S.H."/>
            <person name="Kube M."/>
            <person name="Levy R."/>
            <person name="Li Z."/>
            <person name="Liu B."/>
            <person name="Liu J."/>
            <person name="Liu W."/>
            <person name="Lu J."/>
            <person name="Maheshwari M."/>
            <person name="Nguyen B.-V."/>
            <person name="Okwuonu G.O."/>
            <person name="Palmeiri A."/>
            <person name="Pasternak S."/>
            <person name="Perez L.M."/>
            <person name="Phelps K.A."/>
            <person name="Plopper F.J."/>
            <person name="Qiang B."/>
            <person name="Raymond C."/>
            <person name="Rodriguez R."/>
            <person name="Saenphimmachak C."/>
            <person name="Santibanez J."/>
            <person name="Shen H."/>
            <person name="Shen Y."/>
            <person name="Subramanian S."/>
            <person name="Tabor P.E."/>
            <person name="Verduzco D."/>
            <person name="Waldron L."/>
            <person name="Wang J."/>
            <person name="Wang J."/>
            <person name="Wang Q."/>
            <person name="Williams G.A."/>
            <person name="Wong G.K.-S."/>
            <person name="Yao Z."/>
            <person name="Zhang J."/>
            <person name="Zhang X."/>
            <person name="Zhao G."/>
            <person name="Zhou J."/>
            <person name="Zhou Y."/>
            <person name="Nelson D."/>
            <person name="Lehrach H."/>
            <person name="Reinhardt R."/>
            <person name="Naylor S.L."/>
            <person name="Yang H."/>
            <person name="Olson M."/>
            <person name="Weinstock G."/>
            <person name="Gibbs R.A."/>
        </authorList>
    </citation>
    <scope>NUCLEOTIDE SEQUENCE [LARGE SCALE GENOMIC DNA]</scope>
</reference>
<reference key="7">
    <citation type="journal article" date="2004" name="Genome Res.">
        <title>The status, quality, and expansion of the NIH full-length cDNA project: the Mammalian Gene Collection (MGC).</title>
        <authorList>
            <consortium name="The MGC Project Team"/>
        </authorList>
    </citation>
    <scope>NUCLEOTIDE SEQUENCE [LARGE SCALE MRNA] (ISOFORM 1)</scope>
    <source>
        <tissue>Testis</tissue>
    </source>
</reference>
<reference key="8">
    <citation type="submission" date="2005-04" db="EMBL/GenBank/DDBJ databases">
        <authorList>
            <person name="Suzuki Y."/>
            <person name="Sugano S."/>
            <person name="Totoki Y."/>
            <person name="Toyoda A."/>
            <person name="Takeda T."/>
            <person name="Sakaki Y."/>
            <person name="Tanaka A."/>
            <person name="Yokoyama S."/>
        </authorList>
    </citation>
    <scope>NUCLEOTIDE SEQUENCE [LARGE SCALE MRNA] OF 69-940 (ISOFORM 1)</scope>
    <source>
        <tissue>Liver</tissue>
    </source>
</reference>
<reference key="9">
    <citation type="journal article" date="1992" name="Nature">
        <title>Expression cloning of a human DNA repair gene involved in Xeroderma pigmentosum group C.</title>
        <authorList>
            <person name="Legerski R.J."/>
            <person name="Peterson C.A."/>
        </authorList>
    </citation>
    <scope>NUCLEOTIDE SEQUENCE [MRNA] OF 119-940 (ISOFORM 1)</scope>
</reference>
<reference key="10">
    <citation type="journal article" date="1992" name="Nature">
        <authorList>
            <person name="Legerski R.J."/>
            <person name="Peterson C.A."/>
        </authorList>
    </citation>
    <scope>ERRATUM OF PUBMED:1522891</scope>
</reference>
<reference key="11">
    <citation type="journal article" date="1996" name="Nucleic Acids Res.">
        <title>XPC and human homologs of RAD23: intracellular localization and relationship to other nucleotide excision repair complexes.</title>
        <authorList>
            <person name="van der Spek P.J."/>
            <person name="Eker A."/>
            <person name="Rademakers S."/>
            <person name="Visser C."/>
            <person name="Sugasawa K."/>
            <person name="Masutani C."/>
            <person name="Hanaoka F."/>
            <person name="Bootsma D."/>
            <person name="Hoeijmakers J.H."/>
        </authorList>
    </citation>
    <scope>SUBCELLULAR LOCATION</scope>
</reference>
<reference key="12">
    <citation type="journal article" date="1997" name="Mol. Cell. Biol.">
        <title>Two human homologs of Rad23 are functionally interchangeable in complex formation and stimulation of XPC repair activity.</title>
        <authorList>
            <person name="Sugasawa K."/>
            <person name="Ng J.M."/>
            <person name="Masutani C."/>
            <person name="Maekawa T."/>
            <person name="Uchida A."/>
            <person name="van der Spek P.J."/>
            <person name="Eker A.P."/>
            <person name="Rademakers S."/>
            <person name="Visser C."/>
            <person name="Aboussekhra A."/>
            <person name="Wood R.D."/>
            <person name="Hanaoka F."/>
            <person name="Bootsma D."/>
            <person name="Hoeijmakers J.H."/>
        </authorList>
    </citation>
    <scope>INTERACTION WITH RAD23A</scope>
</reference>
<reference key="13">
    <citation type="journal article" date="1998" name="Mol. Cell">
        <title>Xeroderma pigmentosum group C protein complex is the initiator of global genome nucleotide excision repair.</title>
        <authorList>
            <person name="Sugasawa K."/>
            <person name="Ng J.M."/>
            <person name="Masutani C."/>
            <person name="Iwai S."/>
            <person name="van der Spek P.J."/>
            <person name="Eker A.P."/>
            <person name="Hanaoka F."/>
            <person name="Bootsma D."/>
            <person name="Hoeijmakers J.H."/>
        </authorList>
    </citation>
    <scope>FUNCTION OF THE XPC COMPLEX</scope>
</reference>
<reference key="14">
    <citation type="journal article" date="2000" name="J. Biol. Chem.">
        <title>The xeroderma pigmentosum group C protein complex XPC-HR23B plays an important role in the recruitment of transcription factor IIH to damaged DNA.</title>
        <authorList>
            <person name="Yokoi M."/>
            <person name="Masutani C."/>
            <person name="Maekawa T."/>
            <person name="Sugasawa K."/>
            <person name="Ohkuma Y."/>
            <person name="Hanaoka F."/>
        </authorList>
    </citation>
    <scope>FUNCTION</scope>
    <scope>SUBUNIT</scope>
    <scope>INTERACTION WITH CCNH; GTF2H1 AND ERCC3</scope>
</reference>
<reference key="15">
    <citation type="journal article" date="2000" name="J. Mol. Biol.">
        <title>Stable binding of human XPC complex to irradiated DNA confers strong discrimination for damaged sites.</title>
        <authorList>
            <person name="Batty D."/>
            <person name="Rapic'-Otrin V."/>
            <person name="Levine A.S."/>
            <person name="Wood R.D."/>
        </authorList>
    </citation>
    <scope>FUNCTION OF THE XPC COMPLEX</scope>
</reference>
<reference key="16">
    <citation type="journal article" date="2001" name="J. Biol. Chem.">
        <title>Centrosome protein centrin 2/caltractin 1 is part of the xeroderma pigmentosum group C complex that initiates global genome nucleotide excision repair.</title>
        <authorList>
            <person name="Araki M."/>
            <person name="Masutani C."/>
            <person name="Takemura M."/>
            <person name="Uchida A."/>
            <person name="Sugasawa K."/>
            <person name="Kondoh J."/>
            <person name="Ohkuma Y."/>
            <person name="Hanaoka F."/>
        </authorList>
    </citation>
    <scope>INTERACTION WITH CETN2 AND RAD23B</scope>
    <scope>SUBCELLULAR LOCATION</scope>
    <scope>CHARACTERIZATION OF THE XPC COMPLEX</scope>
</reference>
<reference key="17">
    <citation type="journal article" date="2002" name="DNA Repair">
        <title>A molecular mechanism for DNA damage recognition by the xeroderma pigmentosum group C protein complex.</title>
        <authorList>
            <person name="Sugasawa K."/>
            <person name="Shimizu Y."/>
            <person name="Iwai S."/>
            <person name="Hanaoka F."/>
        </authorList>
    </citation>
    <scope>FUNCTION OF THE XPC COMPLEX</scope>
</reference>
<reference key="18">
    <citation type="journal article" date="2002" name="DNA Repair">
        <title>The carboxy-terminal domain of the XPC protein plays a crucial role in nucleotide excision repair through interactions with transcription factor IIH.</title>
        <authorList>
            <person name="Uchida A."/>
            <person name="Sugasawa K."/>
            <person name="Masutani C."/>
            <person name="Dohmae N."/>
            <person name="Araki M."/>
            <person name="Yokoi M."/>
            <person name="Ohkuma Y."/>
            <person name="Hanaoka F."/>
        </authorList>
    </citation>
    <scope>DNA-BINDING</scope>
    <scope>INTERACTION WITH RAD23B; ERCC2 AND GTF2H1</scope>
</reference>
<reference key="19">
    <citation type="journal article" date="2003" name="DNA Repair">
        <title>DNA bending by the human damage recognition complex XPC-HR23B.</title>
        <authorList>
            <person name="Janicijevic A."/>
            <person name="Sugasawa K."/>
            <person name="Shimizu Y."/>
            <person name="Hanaoka F."/>
            <person name="Wijgers N."/>
            <person name="Djurica M."/>
            <person name="Hoeijmakers J.H."/>
            <person name="Wyman C."/>
        </authorList>
    </citation>
    <scope>FUNCTION OF THE XPC COMPLEX</scope>
</reference>
<reference key="20">
    <citation type="journal article" date="2003" name="EMBO J.">
        <title>Xeroderma pigmentosum group C protein interacts physically and functionally with thymine DNA glycosylase.</title>
        <authorList>
            <person name="Shimizu Y."/>
            <person name="Iwai S."/>
            <person name="Hanaoka F."/>
            <person name="Sugasawa K."/>
        </authorList>
    </citation>
    <scope>INTERACTION WITH TDG</scope>
</reference>
<reference key="21">
    <citation type="journal article" date="2005" name="Cell">
        <title>UV-induced ubiquitylation of XPC protein mediated by UV-DDB-ubiquitin ligase complex.</title>
        <authorList>
            <person name="Sugasawa K."/>
            <person name="Okuda Y."/>
            <person name="Saijo M."/>
            <person name="Nishi R."/>
            <person name="Matsuda N."/>
            <person name="Chu G."/>
            <person name="Mori T."/>
            <person name="Iwai S."/>
            <person name="Tanaka K."/>
            <person name="Tanaka K."/>
            <person name="Hanaoka F."/>
        </authorList>
    </citation>
    <scope>UBIQUITINATION</scope>
    <scope>INTERACTION WITH DDB2</scope>
</reference>
<reference key="22">
    <citation type="journal article" date="2005" name="Mol. Cell. Biol.">
        <title>Centrin 2 stimulates nucleotide excision repair by interacting with xeroderma pigmentosum group C protein.</title>
        <authorList>
            <person name="Nishi R."/>
            <person name="Okuda Y."/>
            <person name="Watanabe E."/>
            <person name="Mori T."/>
            <person name="Iwai S."/>
            <person name="Masutani C."/>
            <person name="Sugasawa K."/>
            <person name="Hanaoka F."/>
        </authorList>
    </citation>
    <scope>INTERACTION WITH CETN2 AND RAD23B</scope>
    <scope>MUTAGENESIS OF TRP-848; LEU-851 AND LEU-855</scope>
</reference>
<reference key="23">
    <citation type="journal article" date="2006" name="Cell">
        <title>Global, in vivo, and site-specific phosphorylation dynamics in signaling networks.</title>
        <authorList>
            <person name="Olsen J.V."/>
            <person name="Blagoev B."/>
            <person name="Gnad F."/>
            <person name="Macek B."/>
            <person name="Kumar C."/>
            <person name="Mortensen P."/>
            <person name="Mann M."/>
        </authorList>
    </citation>
    <scope>PHOSPHORYLATION [LARGE SCALE ANALYSIS] AT SER-94 AND SER-129</scope>
    <scope>IDENTIFICATION BY MASS SPECTROMETRY [LARGE SCALE ANALYSIS]</scope>
    <source>
        <tissue>Cervix carcinoma</tissue>
    </source>
</reference>
<reference key="24">
    <citation type="journal article" date="2007" name="Electrophoresis">
        <title>Toward a global characterization of the phosphoproteome in prostate cancer cells: identification of phosphoproteins in the LNCaP cell line.</title>
        <authorList>
            <person name="Giorgianni F."/>
            <person name="Zhao Y."/>
            <person name="Desiderio D.M."/>
            <person name="Beranova-Giorgianni S."/>
        </authorList>
    </citation>
    <scope>IDENTIFICATION BY MASS SPECTROMETRY [LARGE SCALE ANALYSIS]</scope>
    <source>
        <tissue>Prostate cancer</tissue>
    </source>
</reference>
<reference key="25">
    <citation type="journal article" date="2007" name="Science">
        <title>ATM and ATR substrate analysis reveals extensive protein networks responsive to DNA damage.</title>
        <authorList>
            <person name="Matsuoka S."/>
            <person name="Ballif B.A."/>
            <person name="Smogorzewska A."/>
            <person name="McDonald E.R. III"/>
            <person name="Hurov K.E."/>
            <person name="Luo J."/>
            <person name="Bakalarski C.E."/>
            <person name="Zhao Z."/>
            <person name="Solimini N."/>
            <person name="Lerenthal Y."/>
            <person name="Shiloh Y."/>
            <person name="Gygi S.P."/>
            <person name="Elledge S.J."/>
        </authorList>
    </citation>
    <scope>IDENTIFICATION BY MASS SPECTROMETRY [LARGE SCALE ANALYSIS]</scope>
    <source>
        <tissue>Embryonic kidney</tissue>
    </source>
</reference>
<reference key="26">
    <citation type="journal article" date="2008" name="J. Proteome Res.">
        <title>Combining protein-based IMAC, peptide-based IMAC, and MudPIT for efficient phosphoproteomic analysis.</title>
        <authorList>
            <person name="Cantin G.T."/>
            <person name="Yi W."/>
            <person name="Lu B."/>
            <person name="Park S.K."/>
            <person name="Xu T."/>
            <person name="Lee J.-D."/>
            <person name="Yates J.R. III"/>
        </authorList>
    </citation>
    <scope>IDENTIFICATION BY MASS SPECTROMETRY [LARGE SCALE ANALYSIS]</scope>
    <source>
        <tissue>Cervix carcinoma</tissue>
    </source>
</reference>
<reference key="27">
    <citation type="journal article" date="2008" name="Proc. Natl. Acad. Sci. U.S.A.">
        <title>A quantitative atlas of mitotic phosphorylation.</title>
        <authorList>
            <person name="Dephoure N."/>
            <person name="Zhou C."/>
            <person name="Villen J."/>
            <person name="Beausoleil S.A."/>
            <person name="Bakalarski C.E."/>
            <person name="Elledge S.J."/>
            <person name="Gygi S.P."/>
        </authorList>
    </citation>
    <scope>PHOSPHORYLATION [LARGE SCALE ANALYSIS] AT SER-94; THR-169; SER-883; SER-884 AND SER-891</scope>
    <scope>IDENTIFICATION BY MASS SPECTROMETRY [LARGE SCALE ANALYSIS]</scope>
    <source>
        <tissue>Cervix carcinoma</tissue>
    </source>
</reference>
<reference key="28">
    <citation type="journal article" date="2008" name="Proteomics">
        <title>Large-scale phosphoproteome analysis of human liver tissue by enrichment and fractionation of phosphopeptides with strong anion exchange chromatography.</title>
        <authorList>
            <person name="Han G."/>
            <person name="Ye M."/>
            <person name="Zhou H."/>
            <person name="Jiang X."/>
            <person name="Feng S."/>
            <person name="Jiang X."/>
            <person name="Tian R."/>
            <person name="Wan D."/>
            <person name="Zou H."/>
            <person name="Gu J."/>
        </authorList>
    </citation>
    <scope>IDENTIFICATION BY MASS SPECTROMETRY [LARGE SCALE ANALYSIS]</scope>
    <source>
        <tissue>Liver</tissue>
    </source>
</reference>
<reference key="29">
    <citation type="journal article" date="2009" name="Sci. Signal.">
        <title>Quantitative phosphoproteomic analysis of T cell receptor signaling reveals system-wide modulation of protein-protein interactions.</title>
        <authorList>
            <person name="Mayya V."/>
            <person name="Lundgren D.H."/>
            <person name="Hwang S.-I."/>
            <person name="Rezaul K."/>
            <person name="Wu L."/>
            <person name="Eng J.K."/>
            <person name="Rodionov V."/>
            <person name="Han D.K."/>
        </authorList>
    </citation>
    <scope>IDENTIFICATION BY MASS SPECTROMETRY [LARGE SCALE ANALYSIS]</scope>
    <source>
        <tissue>Leukemic T-cell</tissue>
    </source>
</reference>
<reference key="30">
    <citation type="journal article" date="2010" name="Sci. Signal.">
        <title>Quantitative phosphoproteomics reveals widespread full phosphorylation site occupancy during mitosis.</title>
        <authorList>
            <person name="Olsen J.V."/>
            <person name="Vermeulen M."/>
            <person name="Santamaria A."/>
            <person name="Kumar C."/>
            <person name="Miller M.L."/>
            <person name="Jensen L.J."/>
            <person name="Gnad F."/>
            <person name="Cox J."/>
            <person name="Jensen T.S."/>
            <person name="Nigg E.A."/>
            <person name="Brunak S."/>
            <person name="Mann M."/>
        </authorList>
    </citation>
    <scope>PHOSPHORYLATION [LARGE SCALE ANALYSIS] AT SER-94; SER-129; SER-883 AND SER-884</scope>
    <scope>IDENTIFICATION BY MASS SPECTROMETRY [LARGE SCALE ANALYSIS]</scope>
    <source>
        <tissue>Cervix carcinoma</tissue>
    </source>
</reference>
<reference key="31">
    <citation type="journal article" date="2011" name="Sci. Signal.">
        <title>System-wide temporal characterization of the proteome and phosphoproteome of human embryonic stem cell differentiation.</title>
        <authorList>
            <person name="Rigbolt K.T."/>
            <person name="Prokhorova T.A."/>
            <person name="Akimov V."/>
            <person name="Henningsen J."/>
            <person name="Johansen P.T."/>
            <person name="Kratchmarova I."/>
            <person name="Kassem M."/>
            <person name="Mann M."/>
            <person name="Olsen J.V."/>
            <person name="Blagoev B."/>
        </authorList>
    </citation>
    <scope>PHOSPHORYLATION [LARGE SCALE ANALYSIS] AT SER-94; THR-876; SER-883 AND SER-884</scope>
    <scope>IDENTIFICATION BY MASS SPECTROMETRY [LARGE SCALE ANALYSIS]</scope>
</reference>
<reference key="32">
    <citation type="journal article" date="2013" name="J. Proteome Res.">
        <title>Toward a comprehensive characterization of a human cancer cell phosphoproteome.</title>
        <authorList>
            <person name="Zhou H."/>
            <person name="Di Palma S."/>
            <person name="Preisinger C."/>
            <person name="Peng M."/>
            <person name="Polat A.N."/>
            <person name="Heck A.J."/>
            <person name="Mohammed S."/>
        </authorList>
    </citation>
    <scope>PHOSPHORYLATION [LARGE SCALE ANALYSIS] AT SER-883 AND SER-884</scope>
    <scope>IDENTIFICATION BY MASS SPECTROMETRY [LARGE SCALE ANALYSIS]</scope>
    <source>
        <tissue>Cervix carcinoma</tissue>
        <tissue>Erythroleukemia</tissue>
    </source>
</reference>
<reference key="33">
    <citation type="journal article" date="2014" name="J. Proteomics">
        <title>An enzyme assisted RP-RPLC approach for in-depth analysis of human liver phosphoproteome.</title>
        <authorList>
            <person name="Bian Y."/>
            <person name="Song C."/>
            <person name="Cheng K."/>
            <person name="Dong M."/>
            <person name="Wang F."/>
            <person name="Huang J."/>
            <person name="Sun D."/>
            <person name="Wang L."/>
            <person name="Ye M."/>
            <person name="Zou H."/>
        </authorList>
    </citation>
    <scope>PHOSPHORYLATION [LARGE SCALE ANALYSIS] AT SER-94; SER-140; SER-397; SER-398; SER-399; SER-453; SER-460; SER-883; SER-884 AND SER-903</scope>
    <scope>IDENTIFICATION BY MASS SPECTROMETRY [LARGE SCALE ANALYSIS]</scope>
    <source>
        <tissue>Liver</tissue>
    </source>
</reference>
<reference key="34">
    <citation type="journal article" date="2015" name="Cell Rep.">
        <title>SUMO-2 orchestrates chromatin modifiers in response to DNA damage.</title>
        <authorList>
            <person name="Hendriks I.A."/>
            <person name="Treffers L.W."/>
            <person name="Verlaan-de Vries M."/>
            <person name="Olsen J.V."/>
            <person name="Vertegaal A.C."/>
        </authorList>
    </citation>
    <scope>SUMOYLATION [LARGE SCALE ANALYSIS] AT LYS-81</scope>
    <scope>IDENTIFICATION BY MASS SPECTROMETRY [LARGE SCALE ANALYSIS]</scope>
</reference>
<reference key="35">
    <citation type="journal article" date="2015" name="Mol. Cell. Proteomics">
        <title>System-wide analysis of SUMOylation dynamics in response to replication stress reveals novel small ubiquitin-like modified target proteins and acceptor lysines relevant for genome stability.</title>
        <authorList>
            <person name="Xiao Z."/>
            <person name="Chang J.G."/>
            <person name="Hendriks I.A."/>
            <person name="Sigurdsson J.O."/>
            <person name="Olsen J.V."/>
            <person name="Vertegaal A.C."/>
        </authorList>
    </citation>
    <scope>SUMOYLATION [LARGE SCALE ANALYSIS] AT LYS-81</scope>
    <scope>IDENTIFICATION BY MASS SPECTROMETRY [LARGE SCALE ANALYSIS]</scope>
</reference>
<reference key="36">
    <citation type="journal article" date="2017" name="Nat. Struct. Mol. Biol.">
        <title>Site-specific mapping of the human SUMO proteome reveals co-modification with phosphorylation.</title>
        <authorList>
            <person name="Hendriks I.A."/>
            <person name="Lyon D."/>
            <person name="Young C."/>
            <person name="Jensen L.J."/>
            <person name="Vertegaal A.C."/>
            <person name="Nielsen M.L."/>
        </authorList>
    </citation>
    <scope>SUMOYLATION [LARGE SCALE ANALYSIS] AT LYS-41; LYS-81; LYS-89 AND LYS-161</scope>
    <scope>IDENTIFICATION BY MASS SPECTROMETRY [LARGE SCALE ANALYSIS]</scope>
</reference>
<reference key="37">
    <citation type="journal article" date="2007" name="Mol. Cell. Biol.">
        <title>In vivo destabilization and functional defects of the xeroderma pigmentosum C protein caused by a pathogenic missense mutation.</title>
        <authorList>
            <person name="Yasuda G."/>
            <person name="Nishi R."/>
            <person name="Watanabe E."/>
            <person name="Mori T."/>
            <person name="Iwai S."/>
            <person name="Orioli D."/>
            <person name="Stefanini M."/>
            <person name="Hanaoka F."/>
            <person name="Sugasawa K."/>
        </authorList>
    </citation>
    <scope>CHARACTERIZATION OF VARIANT XP-C SER-690</scope>
</reference>
<reference key="38">
    <citation type="journal article" date="2007" name="PLoS Biol.">
        <title>An aromatic sensor with aversion to damaged strands confers versatility to DNA repair.</title>
        <authorList>
            <person name="Maillard O."/>
            <person name="Solyom S."/>
            <person name="Naegeli H."/>
        </authorList>
    </citation>
    <scope>CHARACTERIZATION OF VARIANT XP-C SER-690</scope>
    <scope>MUTAGENESIS OF PHE-733</scope>
</reference>
<reference key="39">
    <citation type="journal article" date="2008" name="J. Cell Sci.">
        <title>Versatile DNA damage detection by the global genome nucleotide excision repair protein XPC.</title>
        <authorList>
            <person name="Hoogstraten D."/>
            <person name="Bergink S."/>
            <person name="Ng J.M."/>
            <person name="Verbiest V.H."/>
            <person name="Luijsterburg M.S."/>
            <person name="Geverts B."/>
            <person name="Raams A."/>
            <person name="Dinant C."/>
            <person name="Hoeijmakers J.H."/>
            <person name="Vermeulen W."/>
            <person name="Houtsmuller A.B."/>
        </authorList>
    </citation>
    <scope>SUBCELLULAR LOCATION</scope>
</reference>
<reference key="40">
    <citation type="journal article" date="2008" name="J. Cell Sci.">
        <authorList>
            <person name="Hoogstraten D."/>
            <person name="Bergink S."/>
            <person name="Ng J.M."/>
            <person name="Verbiest V.H."/>
            <person name="Luijsterburg M.S."/>
            <person name="Geverts B."/>
            <person name="Raams A."/>
            <person name="Dinant C."/>
            <person name="Hoeijmakers J.H."/>
            <person name="Vermeulen W."/>
            <person name="Houtsmuller A.B."/>
        </authorList>
    </citation>
    <scope>ERRATUM OF PUBMED:18682493</scope>
</reference>
<reference key="41">
    <citation type="journal article" date="2008" name="J. Cell Sci.">
        <authorList>
            <person name="Hoogstraten D."/>
            <person name="Bergink S."/>
            <person name="Ng J.M."/>
            <person name="Verbiest V.H."/>
            <person name="Luijsterburg M.S."/>
            <person name="Geverts B."/>
            <person name="Raams A."/>
            <person name="Dinant C."/>
            <person name="Hoeijmakers J.H."/>
            <person name="Vermeulen W."/>
            <person name="Houtsmuller A.B."/>
        </authorList>
    </citation>
    <scope>ERRATUM OF PUBMED:18682493</scope>
</reference>
<reference key="42">
    <citation type="journal article" date="2009" name="EMBO J.">
        <title>Two-stage dynamic DNA quality check by xeroderma pigmentosum group C protein.</title>
        <authorList>
            <person name="Camenisch U."/>
            <person name="Trautlein D."/>
            <person name="Clement F.C."/>
            <person name="Fei J."/>
            <person name="Leitenstorfer A."/>
            <person name="Ferrando-May E."/>
            <person name="Naegeli H."/>
        </authorList>
    </citation>
    <scope>FUNCTION</scope>
    <scope>CHARACTERIZATION OF VARIANT OF VARIANT XP-C SER-690</scope>
    <scope>MUTAGENESIS OF TRP-531; TRP-542; PHE-733 AND GLU-755</scope>
</reference>
<reference key="43">
    <citation type="journal article" date="2009" name="Mol. Cell">
        <title>Two-step recognition of DNA damage for mammalian nucleotide excision repair: Directional binding of the XPC complex and DNA strand scanning.</title>
        <authorList>
            <person name="Sugasawa K."/>
            <person name="Akagi J."/>
            <person name="Nishi R."/>
            <person name="Iwai S."/>
            <person name="Hanaoka F."/>
        </authorList>
    </citation>
    <scope>FUNCTION OF THE XPC COMPLEX</scope>
</reference>
<reference key="44">
    <citation type="journal article" date="2011" name="Antioxid. Redox Signal.">
        <title>Dissection of the xeroderma pigmentosum group C protein function by site-directed mutagenesis.</title>
        <authorList>
            <person name="Clement F.C."/>
            <person name="Kaczmarek N."/>
            <person name="Mathieu N."/>
            <person name="Tomas M."/>
            <person name="Leitenstorfer A."/>
            <person name="Ferrando-May E."/>
            <person name="Naegeli H."/>
        </authorList>
    </citation>
    <scope>FUNCTION</scope>
    <scope>MUTAGENESIS OF ASN-754; PHE-756; PHE-797 AND PHE-799</scope>
</reference>
<reference key="45">
    <citation type="journal article" date="2010" name="Biochemistry">
        <title>Photo-cross-linking of XPC-Rad23B to cisplatin-damaged DNA reveals contacts with both strands of the DNA duplex and spans the DNA adduct.</title>
        <authorList>
            <person name="Neher T.M."/>
            <person name="Rechkunova N.I."/>
            <person name="Lavrik O.I."/>
            <person name="Turchi J.J."/>
        </authorList>
    </citation>
    <scope>FUNCTION OF THE XPC COMPLEX</scope>
</reference>
<reference key="46">
    <citation type="journal article" date="2010" name="J. Nucleic Acids">
        <title>Stimulation of DNA glycosylase activities by XPC Protein Complex: Roles of protein-protein interactions.</title>
        <authorList>
            <person name="Shimizu Y."/>
            <person name="Uchimura Y."/>
            <person name="Dohmae N."/>
            <person name="Saitoh H."/>
            <person name="Hanaoka F."/>
            <person name="Sugasawa K."/>
        </authorList>
    </citation>
    <scope>FUNCTION OF THE XPC COMPLEX</scope>
    <scope>INTERACTION WITH TDG AND SMUG1</scope>
</reference>
<reference key="47">
    <citation type="journal article" date="2013" name="J. Cell Biol.">
        <title>RNF111/Arkadia is a SUMO-targeted ubiquitin ligase that facilitates the DNA damage response.</title>
        <authorList>
            <person name="Poulsen S.L."/>
            <person name="Hansen R.K."/>
            <person name="Wagner S.A."/>
            <person name="van Cuijk L."/>
            <person name="van Belle G.J."/>
            <person name="Streicher W."/>
            <person name="Wikstroem M."/>
            <person name="Choudhary C."/>
            <person name="Houtsmuller A.B."/>
            <person name="Marteijn J.A."/>
            <person name="Bekker-Jensen S."/>
            <person name="Mailand N."/>
        </authorList>
    </citation>
    <scope>UBIQUITINATION</scope>
    <scope>SUMOYLATION</scope>
</reference>
<reference key="48">
    <citation type="journal article" date="2018" name="Nat. Commun.">
        <title>XPC is an RNA polymerase II cofactor recruiting ATAC to promoters by interacting with E2F1.</title>
        <authorList>
            <person name="Bidon B."/>
            <person name="Iltis I."/>
            <person name="Semer M."/>
            <person name="Nagy Z."/>
            <person name="Larnicol A."/>
            <person name="Cribier A."/>
            <person name="Benkirane M."/>
            <person name="Coin F."/>
            <person name="Egly J.M."/>
            <person name="Le May N."/>
        </authorList>
    </citation>
    <scope>FUNCTION</scope>
    <scope>INTERACTION WITH E2F1 AND KAT2A</scope>
    <scope>CHARACTERIZATION OF VARIANT XP-C HIS-334</scope>
</reference>
<reference key="49">
    <citation type="journal article" date="2019" name="Nat. Chem. Biol.">
        <title>DNA repair complex licenses acetylation of H2A.Z.1 by KAT2A during transcription.</title>
        <authorList>
            <person name="Semer M."/>
            <person name="Bidon B."/>
            <person name="Larnicol A."/>
            <person name="Caliskan G."/>
            <person name="Catez P."/>
            <person name="Egly J.M."/>
            <person name="Coin F."/>
            <person name="Le May N."/>
        </authorList>
    </citation>
    <scope>INTERACTION WITH KAT2A</scope>
</reference>
<reference key="50">
    <citation type="journal article" date="2006" name="Biochemistry">
        <title>Flexibility and plasticity of human centrin 2 binding to the xeroderma pigmentosum group C protein (XPC) from nuclear excision repair.</title>
        <authorList>
            <person name="Yang A."/>
            <person name="Miron S."/>
            <person name="Mouawad L."/>
            <person name="Duchambon P."/>
            <person name="Blouquit Y."/>
            <person name="Craescu C.T."/>
        </authorList>
    </citation>
    <scope>STRUCTURE BY NMR OF 847-863 IN COMPLEX WITH CETN2</scope>
</reference>
<reference key="51">
    <citation type="journal article" date="2006" name="J. Biol. Chem.">
        <title>The structure of the human centrin 2-xeroderma pigmentosum group C protein complex.</title>
        <authorList>
            <person name="Thompson J.R."/>
            <person name="Ryan Z.C."/>
            <person name="Salisbury J.L."/>
            <person name="Kumar R."/>
        </authorList>
    </citation>
    <scope>X-RAY CRYSTALLOGRAPHY (2.35 ANGSTROMS) OF 847-863 IN COMPLEX WITH CETN2</scope>
</reference>
<reference key="52">
    <citation type="journal article" date="2007" name="J. Mol. Biol.">
        <title>Structural, thermodynamic, and cellular characterization of human centrin 2 interaction with xeroderma pigmentosum group C protein.</title>
        <authorList>
            <person name="Charbonnier J.B."/>
            <person name="Renaud E."/>
            <person name="Miron S."/>
            <person name="Le Du M.H."/>
            <person name="Blouquit Y."/>
            <person name="Duchambon P."/>
            <person name="Christova P."/>
            <person name="Shosheva A."/>
            <person name="Rose T."/>
            <person name="Angulo J.F."/>
            <person name="Craescu C.T."/>
        </authorList>
    </citation>
    <scope>X-RAY CRYSTALLOGRAPHY (1.8 ANGSTROMS) OF 847-863 IN COMPLEX WITH CETN2</scope>
</reference>
<reference key="53">
    <citation type="journal article" date="1999" name="Hum. Mutat.">
        <title>A summary of mutations in the UV-sensitive disorders: xeroderma pigmentosum, Cockayne syndrome, and trichothiodystrophy.</title>
        <authorList>
            <person name="Cleaver J.E."/>
            <person name="Thompson L.H."/>
            <person name="Richardson A.S."/>
            <person name="States J.C."/>
        </authorList>
    </citation>
    <scope>REVIEW ON VARIANTS XP-C</scope>
</reference>
<reference key="54">
    <citation type="journal article" date="1993" name="Nat. Genet.">
        <title>Characterization of molecular defects in Xeroderma pigmentosum group C.</title>
        <authorList>
            <person name="Li L."/>
            <person name="Bales E.S."/>
            <person name="Peterson C.A."/>
            <person name="Legerski R.J."/>
        </authorList>
    </citation>
    <scope>VARIANTS XP-C HIS-334 AND VAL-697 INS</scope>
</reference>
<reference key="55">
    <citation type="journal article" date="2000" name="Cancer Res.">
        <title>Mutations in the XPC gene in families with xeroderma pigmentosum and consequences at the cell, protein, and transcript levels.</title>
        <authorList>
            <person name="Chavanne F."/>
            <person name="Broughton B.C."/>
            <person name="Pietra D."/>
            <person name="Nardo T."/>
            <person name="Browitt A."/>
            <person name="Lehmann A.R."/>
            <person name="Stefanini M."/>
        </authorList>
    </citation>
    <scope>VARIANT XP-C SER-690</scope>
</reference>
<evidence type="ECO:0000255" key="1"/>
<evidence type="ECO:0000256" key="2">
    <source>
        <dbReference type="SAM" id="MobiDB-lite"/>
    </source>
</evidence>
<evidence type="ECO:0000269" key="3">
    <source>
    </source>
</evidence>
<evidence type="ECO:0000269" key="4">
    <source>
    </source>
</evidence>
<evidence type="ECO:0000269" key="5">
    <source>
    </source>
</evidence>
<evidence type="ECO:0000269" key="6">
    <source>
    </source>
</evidence>
<evidence type="ECO:0000269" key="7">
    <source>
    </source>
</evidence>
<evidence type="ECO:0000269" key="8">
    <source>
    </source>
</evidence>
<evidence type="ECO:0000269" key="9">
    <source>
    </source>
</evidence>
<evidence type="ECO:0000269" key="10">
    <source>
    </source>
</evidence>
<evidence type="ECO:0000269" key="11">
    <source>
    </source>
</evidence>
<evidence type="ECO:0000269" key="12">
    <source>
    </source>
</evidence>
<evidence type="ECO:0000269" key="13">
    <source>
    </source>
</evidence>
<evidence type="ECO:0000269" key="14">
    <source>
    </source>
</evidence>
<evidence type="ECO:0000269" key="15">
    <source>
    </source>
</evidence>
<evidence type="ECO:0000269" key="16">
    <source>
    </source>
</evidence>
<evidence type="ECO:0000269" key="17">
    <source>
    </source>
</evidence>
<evidence type="ECO:0000269" key="18">
    <source>
    </source>
</evidence>
<evidence type="ECO:0000269" key="19">
    <source>
    </source>
</evidence>
<evidence type="ECO:0000269" key="20">
    <source>
    </source>
</evidence>
<evidence type="ECO:0000269" key="21">
    <source>
    </source>
</evidence>
<evidence type="ECO:0000269" key="22">
    <source>
    </source>
</evidence>
<evidence type="ECO:0000269" key="23">
    <source>
    </source>
</evidence>
<evidence type="ECO:0000269" key="24">
    <source>
    </source>
</evidence>
<evidence type="ECO:0000269" key="25">
    <source>
    </source>
</evidence>
<evidence type="ECO:0000269" key="26">
    <source>
    </source>
</evidence>
<evidence type="ECO:0000269" key="27">
    <source>
    </source>
</evidence>
<evidence type="ECO:0000269" key="28">
    <source>
    </source>
</evidence>
<evidence type="ECO:0000269" key="29">
    <source>
    </source>
</evidence>
<evidence type="ECO:0000269" key="30">
    <source>
    </source>
</evidence>
<evidence type="ECO:0000269" key="31">
    <source>
    </source>
</evidence>
<evidence type="ECO:0000269" key="32">
    <source>
    </source>
</evidence>
<evidence type="ECO:0000269" key="33">
    <source>
    </source>
</evidence>
<evidence type="ECO:0000269" key="34">
    <source ref="4"/>
</evidence>
<evidence type="ECO:0000303" key="35">
    <source>
    </source>
</evidence>
<evidence type="ECO:0000303" key="36">
    <source>
    </source>
</evidence>
<evidence type="ECO:0000305" key="37"/>
<evidence type="ECO:0007744" key="38">
    <source>
    </source>
</evidence>
<evidence type="ECO:0007744" key="39">
    <source>
    </source>
</evidence>
<evidence type="ECO:0007744" key="40">
    <source>
    </source>
</evidence>
<evidence type="ECO:0007744" key="41">
    <source>
    </source>
</evidence>
<evidence type="ECO:0007744" key="42">
    <source>
    </source>
</evidence>
<evidence type="ECO:0007744" key="43">
    <source>
    </source>
</evidence>
<evidence type="ECO:0007744" key="44">
    <source>
    </source>
</evidence>
<evidence type="ECO:0007744" key="45">
    <source>
    </source>
</evidence>
<evidence type="ECO:0007744" key="46">
    <source>
    </source>
</evidence>
<evidence type="ECO:0007829" key="47">
    <source>
        <dbReference type="PDB" id="2OBH"/>
    </source>
</evidence>
<evidence type="ECO:0007829" key="48">
    <source>
        <dbReference type="PDB" id="2RVB"/>
    </source>
</evidence>
<evidence type="ECO:0007829" key="49">
    <source>
        <dbReference type="PDB" id="8EBU"/>
    </source>
</evidence>
<comment type="function">
    <text evidence="4 6 11 12 21 22 23 24 25 33">Involved in global genome nucleotide excision repair (GG-NER) by acting as damage sensing and DNA-binding factor component of the XPC complex (PubMed:10734143, PubMed:10873465, PubMed:12509299, PubMed:12547395, PubMed:19609301, PubMed:19941824, PubMed:20028083, PubMed:20649465, PubMed:20798892, PubMed:9734359). Has only a low DNA repair activity by itself which is stimulated by RAD23B and RAD23A. Has a preference to bind DNA containing a short single-stranded segment but not to damaged oligonucleotides (PubMed:10734143, PubMed:19609301, PubMed:20649465). This feature is proposed to be related to a dynamic sensor function: XPC can rapidly screen duplex DNA for non-hydrogen-bonded bases by forming a transient nucleoprotein intermediate complex which matures into a stable recognition complex through an intrinsic single-stranded DNA-binding activity (PubMed:10734143, PubMed:19609301, PubMed:20649465). The XPC complex is proposed to represent the first factor bound at the sites of DNA damage and together with other core recognition factors, XPA, RPA and the TFIIH complex, is part of the pre-incision (or initial recognition) complex (PubMed:10873465, PubMed:12509299, PubMed:12547395, PubMed:19941824, PubMed:20028083, PubMed:20798892, PubMed:9734359). The XPC complex recognizes a wide spectrum of damaged DNA characterized by distortions of the DNA helix such as single-stranded loops, mismatched bubbles or single-stranded overhangs (PubMed:10873465, PubMed:12509299, PubMed:12547395, PubMed:19941824, PubMed:20028083, PubMed:20798892, PubMed:9734359). The orientation of XPC complex binding appears to be crucial for inducing a productive NER (PubMed:10873465, PubMed:12509299, PubMed:12547395, PubMed:19941824, PubMed:20028083, PubMed:20798892, PubMed:9734359). XPC complex is proposed to recognize and to interact with unpaired bases on the undamaged DNA strand which is followed by recruitment of the TFIIH complex and subsequent scanning for lesions in the opposite strand in a 5'-to-3' direction by the NER machinery (PubMed:10873465, PubMed:12509299, PubMed:12547395, PubMed:19941824, PubMed:20028083, PubMed:20798892, PubMed:9734359). Cyclobutane pyrimidine dimers (CPDs) which are formed upon UV-induced DNA damage esacpe detection by the XPC complex due to a low degree of structural perurbation. Instead they are detected by the UV-DDB complex which in turn recruits and cooperates with the XPC complex in the respective DNA repair (PubMed:10873465, PubMed:12509299, PubMed:12547395, PubMed:19941824, PubMed:20028083, PubMed:20798892, PubMed:9734359). In vitro, the XPC:RAD23B dimer is sufficient to initiate NER; it preferentially binds to cisplatin and UV-damaged double-stranded DNA and also binds to a variety of chemically and structurally diverse DNA adducts (PubMed:20028083). XPC:RAD23B contacts DNA both 5' and 3' of a cisplatin lesion with a preference for the 5' side. XPC:RAD23B induces a bend in DNA upon binding. XPC:RAD23B stimulates the activity of DNA glycosylases TDG and SMUG1 (PubMed:20028083).</text>
</comment>
<comment type="function">
    <text evidence="27 28">In absence of DNA repair, the XPC complex also acts as a transcription coactivator: XPC interacts with the DNA-binding transcription factor E2F1 at a subset of promoters to recruit KAT2A and histone acetyltransferase complexes (HAT) (PubMed:29973595, PubMed:31527837). KAT2A recruitment specifically promotes acetylation of histone variant H2A.Z.1/H2A.Z, but not H2A.Z.2/H2A.V, thereby promoting expression of target genes (PubMed:31527837).</text>
</comment>
<comment type="subunit">
    <text evidence="4 7 9 10 13 14 15 16 19 25 27 28 32">Component of the XPC complex composed of XPC, RAD23B and CETN2 (PubMed:11279143, PubMed:12509233, PubMed:15964821, PubMed:16533048, PubMed:16627479, PubMed:17897675). Interacts with RAD23A; the interaction is suggesting the existence of a functional equivalent variant XPC complex (PubMed:9372924). Interacts with TDG; the interaction is demonstrated using the XPC:RAD23B dimer (PubMed:12505994, PubMed:20798892). Interacts with SMUG1; the interaction is demonstrated using the XPC:RAD23B dimer (PubMed:20798892). Interacts with DDB2 (PubMed:15882621). Interacts with CCNH, GTF2H1 and ERCC3 (PubMed:10734143, PubMed:12509233). Interacts with E2F1 and KAT2A; leading to KAT2A recruitment to promoters and subsequent acetylation of histones (PubMed:29973595, PubMed:31527837).</text>
</comment>
<comment type="interaction">
    <interactant intactId="EBI-372610">
        <id>Q01831</id>
    </interactant>
    <interactant intactId="EBI-1789926">
        <id>P41208</id>
        <label>CETN2</label>
    </interactant>
    <organismsDiffer>false</organismsDiffer>
    <experiments>14</experiments>
</comment>
<comment type="interaction">
    <interactant intactId="EBI-372610">
        <id>Q01831</id>
    </interactant>
    <interactant intactId="EBI-1183307">
        <id>P19447</id>
        <label>ERCC3</label>
    </interactant>
    <organismsDiffer>false</organismsDiffer>
    <experiments>3</experiments>
</comment>
<comment type="interaction">
    <interactant intactId="EBI-372610">
        <id>Q01831</id>
    </interactant>
    <interactant intactId="EBI-715539">
        <id>P32780</id>
        <label>GTF2H1</label>
    </interactant>
    <organismsDiffer>false</organismsDiffer>
    <experiments>3</experiments>
</comment>
<comment type="interaction">
    <interactant intactId="EBI-372610">
        <id>Q01831</id>
    </interactant>
    <interactant intactId="EBI-357745">
        <id>P62195</id>
        <label>PSMC5</label>
    </interactant>
    <organismsDiffer>false</organismsDiffer>
    <experiments>2</experiments>
</comment>
<comment type="interaction">
    <interactant intactId="EBI-372610">
        <id>Q01831</id>
    </interactant>
    <interactant intactId="EBI-954531">
        <id>P54727</id>
        <label>RAD23B</label>
    </interactant>
    <organismsDiffer>false</organismsDiffer>
    <experiments>14</experiments>
</comment>
<comment type="interaction">
    <interactant intactId="EBI-372610">
        <id>Q01831</id>
    </interactant>
    <interactant intactId="EBI-1630636">
        <id>P13288</id>
        <label>BGLF4</label>
    </interactant>
    <organismsDiffer>true</organismsDiffer>
    <experiments>9</experiments>
</comment>
<comment type="interaction">
    <interactant intactId="EBI-15950383">
        <id>Q01831-1</id>
    </interactant>
    <interactant intactId="EBI-1176171">
        <id>Q92466</id>
        <label>DDB2</label>
    </interactant>
    <organismsDiffer>false</organismsDiffer>
    <experiments>4</experiments>
</comment>
<comment type="interaction">
    <interactant intactId="EBI-15950383">
        <id>Q01831-1</id>
    </interactant>
    <interactant intactId="EBI-715539">
        <id>P32780</id>
        <label>GTF2H1</label>
    </interactant>
    <organismsDiffer>false</organismsDiffer>
    <experiments>3</experiments>
</comment>
<comment type="subcellular location">
    <subcellularLocation>
        <location evidence="7 20 31">Nucleus</location>
    </subcellularLocation>
    <subcellularLocation>
        <location evidence="27">Chromosome</location>
    </subcellularLocation>
    <subcellularLocation>
        <location evidence="20">Cytoplasm</location>
    </subcellularLocation>
    <text evidence="20">Omnipresent in the nucleus and consistently associates with and dissociates from DNA in the absence of DNA damage (PubMed:18682493). Continuously shuttles between the cytoplasm and the nucleus, which is impeded by the presence of NER lesions (PubMed:18682493).</text>
</comment>
<comment type="alternative products">
    <event type="alternative splicing"/>
    <isoform>
        <id>Q01831-1</id>
        <name>1</name>
        <sequence type="displayed"/>
    </isoform>
    <isoform>
        <id>Q01831-2</id>
        <name>2</name>
        <sequence type="described" ref="VSP_046344"/>
    </isoform>
    <isoform>
        <id>Q01831-3</id>
        <name>3</name>
        <name>B</name>
        <sequence type="described" ref="VSP_055890 VSP_055891"/>
    </isoform>
</comment>
<comment type="PTM">
    <text evidence="13 26">Ubiquitinated upon UV irradiation; the ubiquitination requires the UV-DDB complex, appears to be reversible and does not serve as a signal for degradation (PubMed:15882621, PubMed:23751493). Ubiquitinated by RNF11 via 'Lys-63'-linked ubiquitination (PubMed:23751493). Ubiquitination by RNF111 is polysumoylation-dependent and promotes nucleotide excision repair (PubMed:23751493).</text>
</comment>
<comment type="PTM">
    <text evidence="26">Sumoylated; sumoylation promotes ubiquitination by RNF111.</text>
</comment>
<comment type="disease" evidence="3 5 17 18 21 27 30">
    <disease id="DI-01157">
        <name>Xeroderma pigmentosum complementation group C</name>
        <acronym>XP-C</acronym>
        <description>An autosomal recessive pigmentary skin disorder characterized by solar hypersensitivity of the skin, high predisposition for developing cancers on areas exposed to sunlight and, in some cases, neurological abnormalities. The skin develops marked freckling and other pigmentation abnormalities.</description>
        <dbReference type="MIM" id="278720"/>
    </disease>
    <text>The disease is caused by variants affecting the gene represented in this entry.</text>
</comment>
<comment type="similarity">
    <text evidence="37">Belongs to the XPC family.</text>
</comment>
<comment type="online information" name="Atlas of Genetics and Cytogenetics in Oncology and Haematology">
    <link uri="https://atlasgeneticsoncology.org/gene/122/XPC"/>
</comment>